<keyword id="KW-0002">3D-structure</keyword>
<keyword id="KW-0007">Acetylation</keyword>
<keyword id="KW-0067">ATP-binding</keyword>
<keyword id="KW-0106">Calcium</keyword>
<keyword id="KW-0107">Calcium channel</keyword>
<keyword id="KW-0109">Calcium transport</keyword>
<keyword id="KW-1003">Cell membrane</keyword>
<keyword id="KW-0175">Coiled coil</keyword>
<keyword id="KW-0968">Cytoplasmic vesicle</keyword>
<keyword id="KW-0407">Ion channel</keyword>
<keyword id="KW-0406">Ion transport</keyword>
<keyword id="KW-0418">Kinase</keyword>
<keyword id="KW-0449">Lipoprotein</keyword>
<keyword id="KW-0472">Membrane</keyword>
<keyword id="KW-0479">Metal-binding</keyword>
<keyword id="KW-1210">Necrosis</keyword>
<keyword id="KW-0547">Nucleotide-binding</keyword>
<keyword id="KW-0539">Nucleus</keyword>
<keyword id="KW-0564">Palmitate</keyword>
<keyword id="KW-0597">Phosphoprotein</keyword>
<keyword id="KW-1185">Reference proteome</keyword>
<keyword id="KW-0723">Serine/threonine-protein kinase</keyword>
<keyword id="KW-0808">Transferase</keyword>
<keyword id="KW-0812">Transmembrane</keyword>
<keyword id="KW-1133">Transmembrane helix</keyword>
<keyword id="KW-0813">Transport</keyword>
<keyword id="KW-0862">Zinc</keyword>
<protein>
    <recommendedName>
        <fullName>Transient receptor potential cation channel subfamily M member 7</fullName>
        <ecNumber evidence="6 16 17 20">2.7.11.1</ecNumber>
    </recommendedName>
    <alternativeName>
        <fullName>Channel-kinase 1</fullName>
    </alternativeName>
    <alternativeName>
        <fullName>Long transient receptor potential channel 7</fullName>
        <shortName>LTrpC-7</shortName>
        <shortName>LTrpC7</shortName>
    </alternativeName>
    <alternativeName>
        <fullName>Transient receptor potential-phospholipase C-interacting kinase</fullName>
        <shortName evidence="27">TRP-PLIK</shortName>
    </alternativeName>
    <component>
        <recommendedName>
            <fullName evidence="30">TRPM7 kinase, cleaved form</fullName>
            <shortName evidence="29">M7CK</shortName>
        </recommendedName>
    </component>
    <component>
        <recommendedName>
            <fullName evidence="30">TRPM7 channel, cleaved form</fullName>
        </recommendedName>
    </component>
</protein>
<comment type="function">
    <text evidence="3 6 7 10 11 12 13 15 18 20 21 23">Bifunctional protein that combines an ion channel with an intrinsic kinase domain, enabling it to modulate cellular functions either by conducting ions through the pore or by phosphorylating downstream proteins via its kinase domain. The channel is highly permeable to divalent cations, specifically calcium (Ca2+), magnesium (Mg2+) and zinc (Zn2+) and mediates their influx (PubMed:11161216, PubMed:11385574, PubMed:28696294, PubMed:29343440). Controls a wide range of biological processes such as Ca2(+), Mg(2+) and Zn(2+) homeostasis, vesicular Zn(2+) release channel and intracellular Ca(2+) signaling, embryonic development, immune responses, cell motility, proliferation and differentiation (PubMed:18974357, PubMed:21045827, PubMed:22203997, PubMed:23878236, PubMed:28696294, PubMed:29203869, PubMed:29343440, PubMed:30770447). The C-terminal alpha-kinase domain autophosphorylates cytoplasmic residues of TRPM7 (PubMed:22222377). TRPM7 phosphorylates SMAD2, suggesting that TRPM7 kinase may play a role in activating SMAD signaling pathways (PubMed:29203869). In vitro, TRPM7 kinase phosphorylates ANXA1 (annexin A1), myosin II isoforms and a variety of proteins with diverse cellular functions (By similarity).</text>
</comment>
<comment type="function">
    <molecule>TRPM7 channel, cleaved form</molecule>
    <text evidence="14">The cleaved channel exhibits substantially higher current and potentiates Fas receptor signaling.</text>
</comment>
<comment type="function">
    <molecule>TRPM7 kinase, cleaved form</molecule>
    <text evidence="14 16">The C-terminal kinase domain can be cleaved from the channel segment in a cell-type-specific fashion. In immune cells, the TRPM7 kinase domain is clipped from the channel domain by caspases in response to Fas-receptor stimulation. The cleaved kinase fragments can translocate to the nucleus, and bind chromatin-remodeling complex proteins in a Zn(2+)-dependent manner to ultimately phosphorylate specific Ser/Thr residues of histones known to be functionally important for cell differentiation and embryonic development.</text>
</comment>
<comment type="catalytic activity">
    <reaction evidence="16 20 31">
        <text>L-seryl-[protein] + ATP = O-phospho-L-seryl-[protein] + ADP + H(+)</text>
        <dbReference type="Rhea" id="RHEA:17989"/>
        <dbReference type="Rhea" id="RHEA-COMP:9863"/>
        <dbReference type="Rhea" id="RHEA-COMP:11604"/>
        <dbReference type="ChEBI" id="CHEBI:15378"/>
        <dbReference type="ChEBI" id="CHEBI:29999"/>
        <dbReference type="ChEBI" id="CHEBI:30616"/>
        <dbReference type="ChEBI" id="CHEBI:83421"/>
        <dbReference type="ChEBI" id="CHEBI:456216"/>
        <dbReference type="EC" id="2.7.11.1"/>
    </reaction>
</comment>
<comment type="catalytic activity">
    <reaction evidence="31">
        <text>L-threonyl-[protein] + ATP = O-phospho-L-threonyl-[protein] + ADP + H(+)</text>
        <dbReference type="Rhea" id="RHEA:46608"/>
        <dbReference type="Rhea" id="RHEA-COMP:11060"/>
        <dbReference type="Rhea" id="RHEA-COMP:11605"/>
        <dbReference type="ChEBI" id="CHEBI:15378"/>
        <dbReference type="ChEBI" id="CHEBI:30013"/>
        <dbReference type="ChEBI" id="CHEBI:30616"/>
        <dbReference type="ChEBI" id="CHEBI:61977"/>
        <dbReference type="ChEBI" id="CHEBI:456216"/>
        <dbReference type="EC" id="2.7.11.1"/>
    </reaction>
</comment>
<comment type="catalytic activity">
    <reaction evidence="7">
        <text>Mg(2+)(in) = Mg(2+)(out)</text>
        <dbReference type="Rhea" id="RHEA:29827"/>
        <dbReference type="ChEBI" id="CHEBI:18420"/>
    </reaction>
</comment>
<comment type="catalytic activity">
    <reaction evidence="6 7 21">
        <text>Ca(2+)(in) = Ca(2+)(out)</text>
        <dbReference type="Rhea" id="RHEA:29671"/>
        <dbReference type="ChEBI" id="CHEBI:29108"/>
    </reaction>
</comment>
<comment type="catalytic activity">
    <reaction evidence="18">
        <text>Zn(2+)(in) = Zn(2+)(out)</text>
        <dbReference type="Rhea" id="RHEA:29351"/>
        <dbReference type="ChEBI" id="CHEBI:29105"/>
    </reaction>
</comment>
<comment type="cofactor">
    <cofactor>
        <name>Zn(2+)</name>
        <dbReference type="ChEBI" id="CHEBI:29105"/>
    </cofactor>
    <text evidence="8">Binds 1 zinc ion per subunit.</text>
</comment>
<comment type="activity regulation">
    <text evidence="2 7 9 10 11 17 19 20 25">Channel displays constitutive activity (PubMed:35389104). Channel activity is negatively regulated by cytosolic Mg(2+), Mg-ATP and low intracellular pH (PubMed:11385574, PubMed:16260839, PubMed:35389104). Resting free cytosolic Mg(2+) and Mg-ATP concentrations seem to be sufficient to block native TRPM7 channel activity (PubMed:21045827, PubMed:28821869, PubMed:29203869). TRPM7 channel activity is highly dependent on membrane levels of phosphatidylinositol 4,5 bisphosphate (PIP2). PIP2 hydrolysis negatively regulates TRPM7 channel activity (By similarity). TRPM7 kinase activity does not affect channel activity (PubMed:25030553, PubMed:29203869). The kinase activity is controlled through the autophosphorylation of a serine/threonine-rich region located N-terminal to the catalytic domain (PubMed:18974357).</text>
</comment>
<comment type="subunit">
    <text evidence="2 8 19 22 26">Homodimer (PubMed:11389851). Homotetramer (PubMed:30108148, PubMed:37156763). Forms heteromers with TRPM6; heteromeric channels are functionally different from the homomeric channels (PubMed:28821869). Interacts with PLCB1 (By similarity).</text>
</comment>
<comment type="interaction">
    <interactant intactId="EBI-8010314">
        <id>Q923J1</id>
    </interactant>
    <interactant intactId="EBI-353957">
        <id>P60710</id>
        <label>Actb</label>
    </interactant>
    <organismsDiffer>false</organismsDiffer>
    <experiments>2</experiments>
</comment>
<comment type="interaction">
    <interactant intactId="EBI-8010314">
        <id>Q923J1</id>
    </interactant>
    <interactant intactId="EBI-2552275">
        <id>Q3U1J4</id>
        <label>Ddb1</label>
    </interactant>
    <organismsDiffer>false</organismsDiffer>
    <experiments>2</experiments>
</comment>
<comment type="interaction">
    <interactant intactId="EBI-8010314">
        <id>Q923J1</id>
    </interactant>
    <interactant intactId="EBI-400906">
        <id>Q8VDD5</id>
        <label>Myh9</label>
    </interactant>
    <organismsDiffer>false</organismsDiffer>
    <experiments>4</experiments>
</comment>
<comment type="interaction">
    <interactant intactId="EBI-8010314">
        <id>Q923J1</id>
    </interactant>
    <interactant intactId="EBI-353779">
        <id>O00571</id>
        <label>DDX3X</label>
    </interactant>
    <organismsDiffer>true</organismsDiffer>
    <experiments>2</experiments>
</comment>
<comment type="interaction">
    <interactant intactId="EBI-8010314">
        <id>Q923J1</id>
    </interactant>
    <interactant intactId="EBI-752324">
        <id>Q8N488</id>
        <label>RYBP</label>
    </interactant>
    <organismsDiffer>true</organismsDiffer>
    <experiments>3</experiments>
</comment>
<comment type="subcellular location">
    <subcellularLocation>
        <location evidence="3">Cell membrane</location>
        <topology evidence="26">Multi-pass membrane protein</topology>
    </subcellularLocation>
    <subcellularLocation>
        <location evidence="18">Cytoplasmic vesicle membrane</location>
        <topology evidence="26">Multi-pass membrane protein</topology>
    </subcellularLocation>
    <text evidence="16 18">Localized largely in intracellular Zn(2+)-storage vesicles (PubMed:28696294).</text>
</comment>
<comment type="subcellular location">
    <molecule>TRPM7 kinase, cleaved form</molecule>
    <subcellularLocation>
        <location evidence="16">Nucleus</location>
    </subcellularLocation>
</comment>
<comment type="tissue specificity">
    <text evidence="6">Found to be expressed in brain and skeletal muscle, with stronger signals in kidney, heart, liver and spleen.</text>
</comment>
<comment type="PTM">
    <text evidence="3">Palmitoylated; palmitoylation at Cys-1143, Cys-1144 and Cys-1146 promotes TRPM7 trafficking from the Golgi to the surface membrane.</text>
</comment>
<comment type="PTM">
    <text evidence="3">Autophosphorylated; autophosphorylation regulates TRPM7 kinase activity towards its substrates.</text>
</comment>
<comment type="PTM">
    <text evidence="14 16">The C-terminal kinase domain can be cleaved from the channel segment in a cell-type-specific fashion (PubMed:22698280, PubMed:24855944). TRPM7 is cleaved by caspase-8, dissociating the kinase from the ion-conducting pore (PubMed:22698280). The cleaved kinase fragments (M7CKs) can translocate to the cell nucleus and binds chromatin-remodeling complex proteins in a Zn(2+)-dependent manner to ultimately phosphorylate specific Ser/Thr residues of histones (PubMed:24855944).</text>
</comment>
<comment type="disruption phenotype">
    <text evidence="10 11 12 15 23 24">Inactivation of Trpm7 in mice results in early embryonic death (6.5-7.5 days) (PubMed:21045827, PubMed:22203997). Mice die as a result of trophoblast defects and consequent failure of implantation (PubMed:34686339). Tissue-specific null mutants shown defects in cardiac and renal morphogenesis, organismal Zn(2+), Mg(2+), and Ca(2+) homeostasis and thrombopoiesis (PubMed:18974357, PubMed:23878236, PubMed:30770447).</text>
</comment>
<comment type="similarity">
    <text evidence="30">In the C-terminal section; belongs to the protein kinase superfamily. Alpha-type protein kinase family. ALPK subfamily.</text>
</comment>
<comment type="similarity">
    <text evidence="30">In the N-terminal section; belongs to the transient receptor (TC 1.A.4) family. LTrpC subfamily. TRPM7 sub-subfamily.</text>
</comment>
<organism>
    <name type="scientific">Mus musculus</name>
    <name type="common">Mouse</name>
    <dbReference type="NCBI Taxonomy" id="10090"/>
    <lineage>
        <taxon>Eukaryota</taxon>
        <taxon>Metazoa</taxon>
        <taxon>Chordata</taxon>
        <taxon>Craniata</taxon>
        <taxon>Vertebrata</taxon>
        <taxon>Euteleostomi</taxon>
        <taxon>Mammalia</taxon>
        <taxon>Eutheria</taxon>
        <taxon>Euarchontoglires</taxon>
        <taxon>Glires</taxon>
        <taxon>Rodentia</taxon>
        <taxon>Myomorpha</taxon>
        <taxon>Muroidea</taxon>
        <taxon>Muridae</taxon>
        <taxon>Murinae</taxon>
        <taxon>Mus</taxon>
        <taxon>Mus</taxon>
    </lineage>
</organism>
<feature type="chain" id="PRO_0000215332" description="Transient receptor potential cation channel subfamily M member 7">
    <location>
        <begin position="1"/>
        <end position="1863"/>
    </location>
</feature>
<feature type="chain" id="PRO_0000461296" description="TRPM7 channel, cleaved form" evidence="14">
    <location>
        <begin position="1"/>
        <end status="unknown"/>
    </location>
</feature>
<feature type="chain" id="PRO_0000461297" description="TRPM7 kinase, cleaved form" evidence="16">
    <location>
        <begin status="unknown"/>
        <end position="1863"/>
    </location>
</feature>
<feature type="topological domain" description="Cytoplasmic" evidence="30">
    <location>
        <begin position="1"/>
        <end position="850"/>
    </location>
</feature>
<feature type="transmembrane region" description="Helical; Name=1" evidence="26 38">
    <location>
        <begin position="851"/>
        <end position="876"/>
    </location>
</feature>
<feature type="topological domain" description="Extracellular" evidence="30">
    <location>
        <begin position="877"/>
        <end position="882"/>
    </location>
</feature>
<feature type="transmembrane region" description="Helical; Name=2" evidence="26 38">
    <location>
        <begin position="883"/>
        <end position="904"/>
    </location>
</feature>
<feature type="topological domain" description="Cytoplasmic" evidence="30">
    <location>
        <begin position="905"/>
        <end position="923"/>
    </location>
</feature>
<feature type="transmembrane region" description="Helical; Name=3" evidence="26 38">
    <location>
        <begin position="924"/>
        <end position="943"/>
    </location>
</feature>
<feature type="topological domain" description="Extracellular" evidence="30">
    <location>
        <begin position="944"/>
        <end position="956"/>
    </location>
</feature>
<feature type="transmembrane region" description="Helical; Name=4" evidence="26 38">
    <location>
        <begin position="957"/>
        <end position="980"/>
    </location>
</feature>
<feature type="topological domain" description="Cytoplasmic" evidence="30">
    <location>
        <begin position="981"/>
        <end position="999"/>
    </location>
</feature>
<feature type="transmembrane region" description="Helical; Name=5" evidence="26 38">
    <location>
        <begin position="1000"/>
        <end position="1023"/>
    </location>
</feature>
<feature type="topological domain" description="Extracellular" evidence="30">
    <location>
        <begin position="1024"/>
        <end position="1025"/>
    </location>
</feature>
<feature type="intramembrane region" description="Pore-forming" evidence="26 38">
    <location>
        <begin position="1026"/>
        <end position="1066"/>
    </location>
</feature>
<feature type="topological domain" description="Extracellular" evidence="30">
    <location>
        <begin position="1067"/>
        <end position="1069"/>
    </location>
</feature>
<feature type="transmembrane region" description="Helical; Name=6" evidence="26 38">
    <location>
        <begin position="1070"/>
        <end position="1098"/>
    </location>
</feature>
<feature type="topological domain" description="Cytoplasmic" evidence="30">
    <location>
        <begin position="1099"/>
        <end position="1863"/>
    </location>
</feature>
<feature type="domain" description="Alpha-type protein kinase" evidence="4">
    <location>
        <begin position="1592"/>
        <end position="1822"/>
    </location>
</feature>
<feature type="region of interest" description="Disordered" evidence="5">
    <location>
        <begin position="544"/>
        <end position="574"/>
    </location>
</feature>
<feature type="region of interest" description="Disordered" evidence="5">
    <location>
        <begin position="1380"/>
        <end position="1418"/>
    </location>
</feature>
<feature type="region of interest" description="Disordered" evidence="5">
    <location>
        <begin position="1498"/>
        <end position="1539"/>
    </location>
</feature>
<feature type="region of interest" description="Disordered" evidence="5">
    <location>
        <begin position="1838"/>
        <end position="1863"/>
    </location>
</feature>
<feature type="coiled-coil region" evidence="1">
    <location>
        <begin position="1198"/>
        <end position="1250"/>
    </location>
</feature>
<feature type="compositionally biased region" description="Low complexity" evidence="5">
    <location>
        <begin position="544"/>
        <end position="555"/>
    </location>
</feature>
<feature type="compositionally biased region" description="Basic and acidic residues" evidence="5">
    <location>
        <begin position="560"/>
        <end position="573"/>
    </location>
</feature>
<feature type="compositionally biased region" description="Low complexity" evidence="5">
    <location>
        <begin position="1385"/>
        <end position="1397"/>
    </location>
</feature>
<feature type="compositionally biased region" description="Polar residues" evidence="5">
    <location>
        <begin position="1398"/>
        <end position="1410"/>
    </location>
</feature>
<feature type="compositionally biased region" description="Basic and acidic residues" evidence="5">
    <location>
        <begin position="1519"/>
        <end position="1530"/>
    </location>
</feature>
<feature type="compositionally biased region" description="Polar residues" evidence="5">
    <location>
        <begin position="1841"/>
        <end position="1863"/>
    </location>
</feature>
<feature type="active site" description="Proton acceptor">
    <location>
        <position position="1765"/>
    </location>
</feature>
<feature type="binding site" evidence="8 33">
    <location>
        <position position="1619"/>
    </location>
    <ligand>
        <name>ADP</name>
        <dbReference type="ChEBI" id="CHEBI:456216"/>
    </ligand>
</feature>
<feature type="binding site" evidence="8 33">
    <location>
        <position position="1620"/>
    </location>
    <ligand>
        <name>ADP</name>
        <dbReference type="ChEBI" id="CHEBI:456216"/>
    </ligand>
</feature>
<feature type="binding site" evidence="8 33">
    <location>
        <position position="1621"/>
    </location>
    <ligand>
        <name>ADP</name>
        <dbReference type="ChEBI" id="CHEBI:456216"/>
    </ligand>
</feature>
<feature type="binding site" evidence="8 33">
    <location>
        <position position="1622"/>
    </location>
    <ligand>
        <name>ADP</name>
        <dbReference type="ChEBI" id="CHEBI:456216"/>
    </ligand>
</feature>
<feature type="binding site" evidence="8 33">
    <location>
        <position position="1646"/>
    </location>
    <ligand>
        <name>ADP</name>
        <dbReference type="ChEBI" id="CHEBI:456216"/>
    </ligand>
</feature>
<feature type="binding site" evidence="8 33">
    <location>
        <position position="1718"/>
    </location>
    <ligand>
        <name>ADP</name>
        <dbReference type="ChEBI" id="CHEBI:456216"/>
    </ligand>
</feature>
<feature type="binding site" evidence="8 33">
    <location>
        <position position="1719"/>
    </location>
    <ligand>
        <name>ADP</name>
        <dbReference type="ChEBI" id="CHEBI:456216"/>
    </ligand>
</feature>
<feature type="binding site" evidence="8 33">
    <location>
        <position position="1721"/>
    </location>
    <ligand>
        <name>ADP</name>
        <dbReference type="ChEBI" id="CHEBI:456216"/>
    </ligand>
</feature>
<feature type="binding site" evidence="8 32 33 34">
    <location>
        <position position="1751"/>
    </location>
    <ligand>
        <name>Zn(2+)</name>
        <dbReference type="ChEBI" id="CHEBI:29105"/>
    </ligand>
</feature>
<feature type="binding site" evidence="8 33">
    <location>
        <position position="1775"/>
    </location>
    <ligand>
        <name>ADP</name>
        <dbReference type="ChEBI" id="CHEBI:456216"/>
    </ligand>
</feature>
<feature type="binding site" evidence="8 32 33 34">
    <location>
        <position position="1808"/>
    </location>
    <ligand>
        <name>Zn(2+)</name>
        <dbReference type="ChEBI" id="CHEBI:29105"/>
    </ligand>
</feature>
<feature type="binding site" evidence="8 32 33 34">
    <location>
        <position position="1810"/>
    </location>
    <ligand>
        <name>Zn(2+)</name>
        <dbReference type="ChEBI" id="CHEBI:29105"/>
    </ligand>
</feature>
<feature type="binding site" evidence="8 32 33 34">
    <location>
        <position position="1814"/>
    </location>
    <ligand>
        <name>Zn(2+)</name>
        <dbReference type="ChEBI" id="CHEBI:29105"/>
    </ligand>
</feature>
<feature type="modified residue" description="N-acetylmethionine" evidence="3">
    <location>
        <position position="1"/>
    </location>
</feature>
<feature type="modified residue" description="Phosphoserine" evidence="3">
    <location>
        <position position="101"/>
    </location>
</feature>
<feature type="modified residue" description="Phosphothreonine" evidence="3">
    <location>
        <position position="1163"/>
    </location>
</feature>
<feature type="modified residue" description="Phosphoserine" evidence="3">
    <location>
        <position position="1191"/>
    </location>
</feature>
<feature type="modified residue" description="Phosphoserine" evidence="3">
    <location>
        <position position="1193"/>
    </location>
</feature>
<feature type="modified residue" description="Phosphoserine" evidence="13">
    <location>
        <position position="1224"/>
    </location>
</feature>
<feature type="modified residue" description="Phosphoserine" evidence="48">
    <location>
        <position position="1255"/>
    </location>
</feature>
<feature type="modified residue" description="Phosphoserine" evidence="3">
    <location>
        <position position="1258"/>
    </location>
</feature>
<feature type="modified residue" description="Phosphothreonine" evidence="3">
    <location>
        <position position="1265"/>
    </location>
</feature>
<feature type="modified residue" description="Phosphoserine" evidence="13">
    <location>
        <position position="1300"/>
    </location>
</feature>
<feature type="modified residue" description="Phosphoserine" evidence="3">
    <location>
        <position position="1357"/>
    </location>
</feature>
<feature type="modified residue" description="Phosphoserine" evidence="3">
    <location>
        <position position="1360"/>
    </location>
</feature>
<feature type="modified residue" description="Phosphoserine" evidence="13">
    <location>
        <position position="1385"/>
    </location>
</feature>
<feature type="modified residue" description="Phosphoserine" evidence="13">
    <location>
        <position position="1386"/>
    </location>
</feature>
<feature type="modified residue" description="Phosphoserine" evidence="3">
    <location>
        <position position="1389"/>
    </location>
</feature>
<feature type="modified residue" description="Phosphoserine" evidence="3">
    <location>
        <position position="1394"/>
    </location>
</feature>
<feature type="modified residue" description="Phosphoserine" evidence="3">
    <location>
        <position position="1395"/>
    </location>
</feature>
<feature type="modified residue" description="Phosphoserine" evidence="3">
    <location>
        <position position="1403"/>
    </location>
</feature>
<feature type="modified residue" description="Phosphothreonine" evidence="13">
    <location>
        <position position="1404"/>
    </location>
</feature>
<feature type="modified residue" description="Phosphoserine" evidence="3">
    <location>
        <position position="1406"/>
    </location>
</feature>
<feature type="modified residue" description="Phosphoserine" evidence="48">
    <location>
        <position position="1445"/>
    </location>
</feature>
<feature type="modified residue" description="Phosphothreonine" evidence="3">
    <location>
        <position position="1454"/>
    </location>
</feature>
<feature type="modified residue" description="Phosphoserine" evidence="3">
    <location>
        <position position="1455"/>
    </location>
</feature>
<feature type="modified residue" description="Phosphothreonine" evidence="13">
    <location>
        <position position="1466"/>
    </location>
</feature>
<feature type="modified residue" description="Phosphothreonine" evidence="3">
    <location>
        <position position="1470"/>
    </location>
</feature>
<feature type="modified residue" description="Phosphoserine" evidence="3">
    <location>
        <position position="1491"/>
    </location>
</feature>
<feature type="modified residue" description="Phosphoserine" evidence="13">
    <location>
        <position position="1498"/>
    </location>
</feature>
<feature type="modified residue" description="Phosphoserine" evidence="47">
    <location>
        <position position="1502"/>
    </location>
</feature>
<feature type="modified residue" description="Phosphoserine" evidence="3">
    <location>
        <position position="1511"/>
    </location>
</feature>
<feature type="modified residue" description="Phosphoserine" evidence="3">
    <location>
        <position position="1525"/>
    </location>
</feature>
<feature type="modified residue" description="Phosphoserine" evidence="3">
    <location>
        <position position="1531"/>
    </location>
</feature>
<feature type="modified residue" description="Phosphothreonine" evidence="3">
    <location>
        <position position="1535"/>
    </location>
</feature>
<feature type="modified residue" description="Phosphoserine" evidence="3">
    <location>
        <position position="1541"/>
    </location>
</feature>
<feature type="modified residue" description="Phosphothreonine" evidence="3">
    <location>
        <position position="1549"/>
    </location>
</feature>
<feature type="modified residue" description="Phosphoserine" evidence="3">
    <location>
        <position position="1565"/>
    </location>
</feature>
<feature type="modified residue" description="Phosphoserine" evidence="13">
    <location>
        <position position="1567"/>
    </location>
</feature>
<feature type="modified residue" description="Phosphothreonine" evidence="3">
    <location>
        <position position="1581"/>
    </location>
</feature>
<feature type="modified residue" description="Phosphoserine" evidence="3">
    <location>
        <position position="1596"/>
    </location>
</feature>
<feature type="modified residue" description="Phosphoserine" evidence="3">
    <location>
        <position position="1613"/>
    </location>
</feature>
<feature type="modified residue" description="Phosphoserine" evidence="3">
    <location>
        <position position="1658"/>
    </location>
</feature>
<feature type="modified residue" description="Phosphothreonine" evidence="3">
    <location>
        <position position="1683"/>
    </location>
</feature>
<feature type="modified residue" description="Phosphoserine" evidence="3">
    <location>
        <position position="1777"/>
    </location>
</feature>
<feature type="modified residue" description="Phosphothreonine" evidence="3">
    <location>
        <position position="1828"/>
    </location>
</feature>
<feature type="modified residue" description="Phosphoserine" evidence="13">
    <location>
        <position position="1846"/>
    </location>
</feature>
<feature type="modified residue" description="Phosphoserine" evidence="13">
    <location>
        <position position="1849"/>
    </location>
</feature>
<feature type="modified residue" description="Phosphoserine" evidence="3">
    <location>
        <position position="1858"/>
    </location>
</feature>
<feature type="lipid moiety-binding region" description="S-palmitoyl cysteine" evidence="3">
    <location>
        <position position="1143"/>
    </location>
</feature>
<feature type="lipid moiety-binding region" description="S-palmitoyl cysteine" evidence="3">
    <location>
        <position position="1144"/>
    </location>
</feature>
<feature type="lipid moiety-binding region" description="S-palmitoyl cysteine" evidence="3">
    <location>
        <position position="1146"/>
    </location>
</feature>
<feature type="mutagenesis site" description="Abrogates the inhibitory action of physiological intracellular Mg(2+) concentration. Does not abrogates the inhibitory action of Mg-ATP and PIP2." evidence="25">
    <original>N</original>
    <variation>Q</variation>
    <location>
        <position position="1097"/>
    </location>
</feature>
<feature type="mutagenesis site" description="High constitutive activity. Abrogates the inhibitory action of intracellular Mg(2+). Abrogates the inhibitory action of Mg-ATP and PIP2." evidence="25 26">
    <original>N</original>
    <variation>Q</variation>
    <location>
        <position position="1098"/>
    </location>
</feature>
<feature type="mutagenesis site" description="Kinase-dead knockin mouse mice display normal development and no changes in serum Mg(2+) and Ca(2+) concentrations." evidence="17 20">
    <original>K</original>
    <variation>R</variation>
    <location>
        <position position="1646"/>
    </location>
</feature>
<feature type="mutagenesis site" description="Severe reduction of kinase activity." evidence="6">
    <original>G</original>
    <variation>D</variation>
    <location>
        <position position="1797"/>
    </location>
</feature>
<feature type="mutagenesis site" description="Loss of kinase activity; when associated with A-1813." evidence="6">
    <original>C</original>
    <variation>A</variation>
    <location>
        <position position="1810"/>
    </location>
</feature>
<feature type="mutagenesis site" description="Loss of kinase activity; when associated with A-1820." evidence="6">
    <original>C</original>
    <variation>A</variation>
    <location>
        <position position="1813"/>
    </location>
</feature>
<feature type="sequence conflict" description="In Ref. 3; AAF73131." evidence="30" ref="3">
    <original>K</original>
    <variation>R</variation>
    <location>
        <position position="66"/>
    </location>
</feature>
<feature type="sequence conflict" description="In Ref. 5; BAB29509." evidence="30" ref="5">
    <original>L</original>
    <variation>F</variation>
    <location>
        <position position="338"/>
    </location>
</feature>
<feature type="sequence conflict" description="In Ref. 5; BAC33685." evidence="30" ref="5">
    <original>K</original>
    <variation>E</variation>
    <location>
        <position position="723"/>
    </location>
</feature>
<feature type="sequence conflict" description="In Ref. 5; BAC33685." evidence="30" ref="5">
    <original>I</original>
    <variation>T</variation>
    <location>
        <position position="810"/>
    </location>
</feature>
<feature type="sequence conflict" description="In Ref. 2; AAK57433 and 5; BAC26234." evidence="30" ref="2 5">
    <location>
        <position position="1494"/>
    </location>
</feature>
<feature type="helix" evidence="53">
    <location>
        <begin position="6"/>
        <end position="10"/>
    </location>
</feature>
<feature type="strand" evidence="53">
    <location>
        <begin position="13"/>
        <end position="16"/>
    </location>
</feature>
<feature type="strand" evidence="53">
    <location>
        <begin position="22"/>
        <end position="25"/>
    </location>
</feature>
<feature type="turn" evidence="53">
    <location>
        <begin position="30"/>
        <end position="34"/>
    </location>
</feature>
<feature type="helix" evidence="53">
    <location>
        <begin position="35"/>
        <end position="38"/>
    </location>
</feature>
<feature type="strand" evidence="54">
    <location>
        <begin position="41"/>
        <end position="47"/>
    </location>
</feature>
<feature type="helix" evidence="53">
    <location>
        <begin position="48"/>
        <end position="51"/>
    </location>
</feature>
<feature type="turn" evidence="53">
    <location>
        <begin position="54"/>
        <end position="62"/>
    </location>
</feature>
<feature type="strand" evidence="55">
    <location>
        <begin position="63"/>
        <end position="66"/>
    </location>
</feature>
<feature type="strand" evidence="56">
    <location>
        <begin position="68"/>
        <end position="71"/>
    </location>
</feature>
<feature type="helix" evidence="53">
    <location>
        <begin position="72"/>
        <end position="75"/>
    </location>
</feature>
<feature type="turn" evidence="53">
    <location>
        <begin position="80"/>
        <end position="82"/>
    </location>
</feature>
<feature type="strand" evidence="53">
    <location>
        <begin position="83"/>
        <end position="87"/>
    </location>
</feature>
<feature type="strand" evidence="53">
    <location>
        <begin position="91"/>
        <end position="96"/>
    </location>
</feature>
<feature type="turn" evidence="53">
    <location>
        <begin position="101"/>
        <end position="103"/>
    </location>
</feature>
<feature type="strand" evidence="53">
    <location>
        <begin position="105"/>
        <end position="112"/>
    </location>
</feature>
<feature type="helix" evidence="53">
    <location>
        <begin position="117"/>
        <end position="125"/>
    </location>
</feature>
<feature type="turn" evidence="54">
    <location>
        <begin position="127"/>
        <end position="129"/>
    </location>
</feature>
<feature type="strand" evidence="53">
    <location>
        <begin position="136"/>
        <end position="141"/>
    </location>
</feature>
<feature type="helix" evidence="53">
    <location>
        <begin position="150"/>
        <end position="156"/>
    </location>
</feature>
<feature type="helix" evidence="53">
    <location>
        <begin position="159"/>
        <end position="165"/>
    </location>
</feature>
<feature type="turn" evidence="53">
    <location>
        <begin position="166"/>
        <end position="168"/>
    </location>
</feature>
<feature type="strand" evidence="53">
    <location>
        <begin position="170"/>
        <end position="173"/>
    </location>
</feature>
<feature type="turn" evidence="51">
    <location>
        <begin position="177"/>
        <end position="179"/>
    </location>
</feature>
<feature type="helix" evidence="53">
    <location>
        <begin position="181"/>
        <end position="189"/>
    </location>
</feature>
<feature type="helix" evidence="53">
    <location>
        <begin position="190"/>
        <end position="192"/>
    </location>
</feature>
<feature type="strand" evidence="53">
    <location>
        <begin position="195"/>
        <end position="197"/>
    </location>
</feature>
<feature type="strand" evidence="53">
    <location>
        <begin position="200"/>
        <end position="206"/>
    </location>
</feature>
<feature type="helix" evidence="53">
    <location>
        <begin position="207"/>
        <end position="209"/>
    </location>
</feature>
<feature type="turn" evidence="53">
    <location>
        <begin position="211"/>
        <end position="216"/>
    </location>
</feature>
<feature type="strand" evidence="53">
    <location>
        <begin position="218"/>
        <end position="221"/>
    </location>
</feature>
<feature type="strand" evidence="53">
    <location>
        <begin position="231"/>
        <end position="233"/>
    </location>
</feature>
<feature type="strand" evidence="58">
    <location>
        <begin position="234"/>
        <end position="236"/>
    </location>
</feature>
<feature type="strand" evidence="53">
    <location>
        <begin position="243"/>
        <end position="249"/>
    </location>
</feature>
<feature type="strand" evidence="54">
    <location>
        <begin position="250"/>
        <end position="254"/>
    </location>
</feature>
<feature type="helix" evidence="53">
    <location>
        <begin position="260"/>
        <end position="271"/>
    </location>
</feature>
<feature type="strand" evidence="53">
    <location>
        <begin position="273"/>
        <end position="278"/>
    </location>
</feature>
<feature type="strand" evidence="54">
    <location>
        <begin position="279"/>
        <end position="282"/>
    </location>
</feature>
<feature type="strand" evidence="53">
    <location>
        <begin position="285"/>
        <end position="291"/>
    </location>
</feature>
<feature type="helix" evidence="53">
    <location>
        <begin position="294"/>
        <end position="304"/>
    </location>
</feature>
<feature type="strand" evidence="53">
    <location>
        <begin position="306"/>
        <end position="308"/>
    </location>
</feature>
<feature type="strand" evidence="53">
    <location>
        <begin position="312"/>
        <end position="314"/>
    </location>
</feature>
<feature type="strand" evidence="52">
    <location>
        <begin position="318"/>
        <end position="320"/>
    </location>
</feature>
<feature type="helix" evidence="53">
    <location>
        <begin position="321"/>
        <end position="331"/>
    </location>
</feature>
<feature type="strand" evidence="53">
    <location>
        <begin position="334"/>
        <end position="337"/>
    </location>
</feature>
<feature type="strand" evidence="54">
    <location>
        <begin position="339"/>
        <end position="341"/>
    </location>
</feature>
<feature type="helix" evidence="53">
    <location>
        <begin position="343"/>
        <end position="353"/>
    </location>
</feature>
<feature type="helix" evidence="53">
    <location>
        <begin position="359"/>
        <end position="371"/>
    </location>
</feature>
<feature type="helix" evidence="51">
    <location>
        <begin position="372"/>
        <end position="374"/>
    </location>
</feature>
<feature type="strand" evidence="53">
    <location>
        <begin position="377"/>
        <end position="380"/>
    </location>
</feature>
<feature type="turn" evidence="53">
    <location>
        <begin position="383"/>
        <end position="386"/>
    </location>
</feature>
<feature type="strand" evidence="53">
    <location>
        <begin position="387"/>
        <end position="389"/>
    </location>
</feature>
<feature type="helix" evidence="53">
    <location>
        <begin position="391"/>
        <end position="397"/>
    </location>
</feature>
<feature type="turn" evidence="53">
    <location>
        <begin position="398"/>
        <end position="400"/>
    </location>
</feature>
<feature type="strand" evidence="53">
    <location>
        <begin position="401"/>
        <end position="403"/>
    </location>
</feature>
<feature type="helix" evidence="53">
    <location>
        <begin position="407"/>
        <end position="417"/>
    </location>
</feature>
<feature type="helix" evidence="53">
    <location>
        <begin position="420"/>
        <end position="426"/>
    </location>
</feature>
<feature type="strand" evidence="57">
    <location>
        <begin position="428"/>
        <end position="431"/>
    </location>
</feature>
<feature type="helix" evidence="53">
    <location>
        <begin position="438"/>
        <end position="448"/>
    </location>
</feature>
<feature type="helix" evidence="53">
    <location>
        <begin position="452"/>
        <end position="460"/>
    </location>
</feature>
<feature type="helix" evidence="53">
    <location>
        <begin position="465"/>
        <end position="468"/>
    </location>
</feature>
<feature type="helix" evidence="53">
    <location>
        <begin position="471"/>
        <end position="478"/>
    </location>
</feature>
<feature type="strand" evidence="51">
    <location>
        <begin position="482"/>
        <end position="484"/>
    </location>
</feature>
<feature type="helix" evidence="53">
    <location>
        <begin position="488"/>
        <end position="496"/>
    </location>
</feature>
<feature type="strand" evidence="53">
    <location>
        <begin position="497"/>
        <end position="499"/>
    </location>
</feature>
<feature type="helix" evidence="53">
    <location>
        <begin position="509"/>
        <end position="520"/>
    </location>
</feature>
<feature type="helix" evidence="53">
    <location>
        <begin position="527"/>
        <end position="529"/>
    </location>
</feature>
<feature type="helix" evidence="53">
    <location>
        <begin position="531"/>
        <end position="537"/>
    </location>
</feature>
<feature type="helix" evidence="53">
    <location>
        <begin position="621"/>
        <end position="631"/>
    </location>
</feature>
<feature type="helix" evidence="53">
    <location>
        <begin position="635"/>
        <end position="642"/>
    </location>
</feature>
<feature type="strand" evidence="53">
    <location>
        <begin position="643"/>
        <end position="646"/>
    </location>
</feature>
<feature type="helix" evidence="53">
    <location>
        <begin position="648"/>
        <end position="667"/>
    </location>
</feature>
<feature type="strand" evidence="55">
    <location>
        <begin position="671"/>
        <end position="673"/>
    </location>
</feature>
<feature type="helix" evidence="53">
    <location>
        <begin position="675"/>
        <end position="700"/>
    </location>
</feature>
<feature type="helix" evidence="53">
    <location>
        <begin position="702"/>
        <end position="710"/>
    </location>
</feature>
<feature type="helix" evidence="53">
    <location>
        <begin position="714"/>
        <end position="716"/>
    </location>
</feature>
<feature type="helix" evidence="53">
    <location>
        <begin position="721"/>
        <end position="727"/>
    </location>
</feature>
<feature type="helix" evidence="53">
    <location>
        <begin position="731"/>
        <end position="734"/>
    </location>
</feature>
<feature type="helix" evidence="53">
    <location>
        <begin position="737"/>
        <end position="748"/>
    </location>
</feature>
<feature type="turn" evidence="51">
    <location>
        <begin position="753"/>
        <end position="755"/>
    </location>
</feature>
<feature type="helix" evidence="53">
    <location>
        <begin position="757"/>
        <end position="766"/>
    </location>
</feature>
<feature type="helix" evidence="53">
    <location>
        <begin position="768"/>
        <end position="773"/>
    </location>
</feature>
<feature type="turn" evidence="53">
    <location>
        <begin position="779"/>
        <end position="783"/>
    </location>
</feature>
<feature type="helix" evidence="51">
    <location>
        <begin position="789"/>
        <end position="793"/>
    </location>
</feature>
<feature type="helix" evidence="53">
    <location>
        <begin position="841"/>
        <end position="849"/>
    </location>
</feature>
<feature type="helix" evidence="53">
    <location>
        <begin position="852"/>
        <end position="875"/>
    </location>
</feature>
<feature type="helix" evidence="53">
    <location>
        <begin position="884"/>
        <end position="905"/>
    </location>
</feature>
<feature type="strand" evidence="53">
    <location>
        <begin position="907"/>
        <end position="910"/>
    </location>
</feature>
<feature type="helix" evidence="53">
    <location>
        <begin position="912"/>
        <end position="919"/>
    </location>
</feature>
<feature type="helix" evidence="53">
    <location>
        <begin position="923"/>
        <end position="943"/>
    </location>
</feature>
<feature type="strand" evidence="53">
    <location>
        <begin position="950"/>
        <end position="954"/>
    </location>
</feature>
<feature type="helix" evidence="53">
    <location>
        <begin position="956"/>
        <end position="974"/>
    </location>
</feature>
<feature type="helix" evidence="53">
    <location>
        <begin position="976"/>
        <end position="980"/>
    </location>
</feature>
<feature type="helix" evidence="53">
    <location>
        <begin position="986"/>
        <end position="999"/>
    </location>
</feature>
<feature type="helix" evidence="53">
    <location>
        <begin position="1001"/>
        <end position="1022"/>
    </location>
</feature>
<feature type="helix" evidence="53">
    <location>
        <begin position="1031"/>
        <end position="1043"/>
    </location>
</feature>
<feature type="turn" evidence="53">
    <location>
        <begin position="1044"/>
        <end position="1046"/>
    </location>
</feature>
<feature type="helix" evidence="53">
    <location>
        <begin position="1050"/>
        <end position="1052"/>
    </location>
</feature>
<feature type="strand" evidence="57">
    <location>
        <begin position="1057"/>
        <end position="1059"/>
    </location>
</feature>
<feature type="helix" evidence="53">
    <location>
        <begin position="1063"/>
        <end position="1065"/>
    </location>
</feature>
<feature type="helix" evidence="53">
    <location>
        <begin position="1070"/>
        <end position="1072"/>
    </location>
</feature>
<feature type="helix" evidence="53">
    <location>
        <begin position="1073"/>
        <end position="1085"/>
    </location>
</feature>
<feature type="helix" evidence="53">
    <location>
        <begin position="1087"/>
        <end position="1105"/>
    </location>
</feature>
<feature type="helix" evidence="53">
    <location>
        <begin position="1107"/>
        <end position="1124"/>
    </location>
</feature>
<feature type="turn" evidence="53">
    <location>
        <begin position="1130"/>
        <end position="1132"/>
    </location>
</feature>
<feature type="helix" evidence="53">
    <location>
        <begin position="1133"/>
        <end position="1145"/>
    </location>
</feature>
<feature type="helix" evidence="53">
    <location>
        <begin position="1164"/>
        <end position="1191"/>
    </location>
</feature>
<feature type="helix" evidence="53">
    <location>
        <begin position="1193"/>
        <end position="1228"/>
    </location>
</feature>
<feature type="helix" evidence="49">
    <location>
        <begin position="1555"/>
        <end position="1562"/>
    </location>
</feature>
<feature type="helix" evidence="49">
    <location>
        <begin position="1563"/>
        <end position="1565"/>
    </location>
</feature>
<feature type="strand" evidence="49">
    <location>
        <begin position="1576"/>
        <end position="1583"/>
    </location>
</feature>
<feature type="strand" evidence="49">
    <location>
        <begin position="1585"/>
        <end position="1588"/>
    </location>
</feature>
<feature type="helix" evidence="49">
    <location>
        <begin position="1590"/>
        <end position="1595"/>
    </location>
</feature>
<feature type="strand" evidence="49">
    <location>
        <begin position="1598"/>
        <end position="1600"/>
    </location>
</feature>
<feature type="strand" evidence="49">
    <location>
        <begin position="1605"/>
        <end position="1613"/>
    </location>
</feature>
<feature type="strand" evidence="49">
    <location>
        <begin position="1620"/>
        <end position="1632"/>
    </location>
</feature>
<feature type="helix" evidence="49">
    <location>
        <begin position="1633"/>
        <end position="1635"/>
    </location>
</feature>
<feature type="strand" evidence="49">
    <location>
        <begin position="1641"/>
        <end position="1648"/>
    </location>
</feature>
<feature type="helix" evidence="49">
    <location>
        <begin position="1650"/>
        <end position="1655"/>
    </location>
</feature>
<feature type="turn" evidence="49">
    <location>
        <begin position="1657"/>
        <end position="1659"/>
    </location>
</feature>
<feature type="helix" evidence="49">
    <location>
        <begin position="1664"/>
        <end position="1689"/>
    </location>
</feature>
<feature type="strand" evidence="49">
    <location>
        <begin position="1704"/>
        <end position="1708"/>
    </location>
</feature>
<feature type="turn" evidence="49">
    <location>
        <begin position="1709"/>
        <end position="1712"/>
    </location>
</feature>
<feature type="strand" evidence="49">
    <location>
        <begin position="1713"/>
        <end position="1719"/>
    </location>
</feature>
<feature type="strand" evidence="49">
    <location>
        <begin position="1726"/>
        <end position="1729"/>
    </location>
</feature>
<feature type="helix" evidence="49">
    <location>
        <begin position="1741"/>
        <end position="1756"/>
    </location>
</feature>
<feature type="turn" evidence="49">
    <location>
        <begin position="1757"/>
        <end position="1759"/>
    </location>
</feature>
<feature type="strand" evidence="49">
    <location>
        <begin position="1760"/>
        <end position="1764"/>
    </location>
</feature>
<feature type="strand" evidence="49">
    <location>
        <begin position="1767"/>
        <end position="1769"/>
    </location>
</feature>
<feature type="strand" evidence="50">
    <location>
        <begin position="1772"/>
        <end position="1775"/>
    </location>
</feature>
<feature type="strand" evidence="49">
    <location>
        <begin position="1777"/>
        <end position="1780"/>
    </location>
</feature>
<feature type="helix" evidence="49">
    <location>
        <begin position="1786"/>
        <end position="1788"/>
    </location>
</feature>
<feature type="strand" evidence="49">
    <location>
        <begin position="1790"/>
        <end position="1793"/>
    </location>
</feature>
<feature type="helix" evidence="49">
    <location>
        <begin position="1800"/>
        <end position="1807"/>
    </location>
</feature>
<feature type="helix" evidence="49">
    <location>
        <begin position="1812"/>
        <end position="1816"/>
    </location>
</feature>
<feature type="strand" evidence="50">
    <location>
        <begin position="1822"/>
        <end position="1824"/>
    </location>
</feature>
<proteinExistence type="evidence at protein level"/>
<accession>Q923J1</accession>
<accession>A2AI58</accession>
<accession>Q8C7S7</accession>
<accession>Q8CE54</accession>
<accession>Q921Y5</accession>
<accession>Q925B2</accession>
<accession>Q9CUT2</accession>
<accession>Q9JLQ1</accession>
<dbReference type="EC" id="2.7.11.1" evidence="6 16 17 20"/>
<dbReference type="EMBL" id="AY032951">
    <property type="protein sequence ID" value="AAK50377.1"/>
    <property type="molecule type" value="mRNA"/>
</dbReference>
<dbReference type="EMBL" id="AF376052">
    <property type="protein sequence ID" value="AAK57433.1"/>
    <property type="molecule type" value="mRNA"/>
</dbReference>
<dbReference type="EMBL" id="AF149013">
    <property type="protein sequence ID" value="AAF73131.1"/>
    <property type="molecule type" value="mRNA"/>
</dbReference>
<dbReference type="EMBL" id="AL732330">
    <property type="status" value="NOT_ANNOTATED_CDS"/>
    <property type="molecule type" value="Genomic_DNA"/>
</dbReference>
<dbReference type="EMBL" id="AK049329">
    <property type="protein sequence ID" value="BAC33685.1"/>
    <property type="molecule type" value="mRNA"/>
</dbReference>
<dbReference type="EMBL" id="AK029000">
    <property type="protein sequence ID" value="BAC26234.1"/>
    <property type="molecule type" value="mRNA"/>
</dbReference>
<dbReference type="EMBL" id="AK014698">
    <property type="protein sequence ID" value="BAB29509.1"/>
    <property type="molecule type" value="mRNA"/>
</dbReference>
<dbReference type="EMBL" id="BC009137">
    <property type="protein sequence ID" value="AAH09137.1"/>
    <property type="molecule type" value="mRNA"/>
</dbReference>
<dbReference type="CCDS" id="CCDS16689.1"/>
<dbReference type="RefSeq" id="NP_001157797.1">
    <property type="nucleotide sequence ID" value="NM_001164325.1"/>
</dbReference>
<dbReference type="RefSeq" id="NP_067425.2">
    <property type="nucleotide sequence ID" value="NM_021450.2"/>
</dbReference>
<dbReference type="PDB" id="1IA9">
    <property type="method" value="X-ray"/>
    <property type="resolution" value="2.00 A"/>
    <property type="chains" value="A/B=1549-1828"/>
</dbReference>
<dbReference type="PDB" id="1IAH">
    <property type="method" value="X-ray"/>
    <property type="resolution" value="2.40 A"/>
    <property type="chains" value="A/B=1549-1828"/>
</dbReference>
<dbReference type="PDB" id="1IAJ">
    <property type="method" value="X-ray"/>
    <property type="resolution" value="2.80 A"/>
    <property type="chains" value="A/B=1549-1828"/>
</dbReference>
<dbReference type="PDB" id="5ZX5">
    <property type="method" value="EM"/>
    <property type="resolution" value="3.28 A"/>
    <property type="chains" value="A/B/C/D=2-1230"/>
</dbReference>
<dbReference type="PDB" id="6BWD">
    <property type="method" value="EM"/>
    <property type="resolution" value="3.70 A"/>
    <property type="chains" value="A/B/C/D=467-1300"/>
</dbReference>
<dbReference type="PDB" id="6BWF">
    <property type="method" value="EM"/>
    <property type="resolution" value="4.10 A"/>
    <property type="chains" value="A/B/C/D=467-1300"/>
</dbReference>
<dbReference type="PDB" id="8SI2">
    <property type="method" value="EM"/>
    <property type="resolution" value="2.19 A"/>
    <property type="chains" value="A/B/C/D=2-1280"/>
</dbReference>
<dbReference type="PDB" id="8SI3">
    <property type="method" value="EM"/>
    <property type="resolution" value="2.61 A"/>
    <property type="chains" value="A/B/C/D=2-1280"/>
</dbReference>
<dbReference type="PDB" id="8SI4">
    <property type="method" value="EM"/>
    <property type="resolution" value="2.46 A"/>
    <property type="chains" value="A/B/C/D=2-1280"/>
</dbReference>
<dbReference type="PDB" id="8SI5">
    <property type="method" value="EM"/>
    <property type="resolution" value="2.17 A"/>
    <property type="chains" value="A/B/C/D=2-1280"/>
</dbReference>
<dbReference type="PDB" id="8SI6">
    <property type="method" value="EM"/>
    <property type="resolution" value="2.44 A"/>
    <property type="chains" value="A/B/C/D=2-1280"/>
</dbReference>
<dbReference type="PDB" id="8SI7">
    <property type="method" value="EM"/>
    <property type="resolution" value="2.59 A"/>
    <property type="chains" value="A/B/C/D=2-1280"/>
</dbReference>
<dbReference type="PDB" id="8SI8">
    <property type="method" value="EM"/>
    <property type="resolution" value="2.99 A"/>
    <property type="chains" value="A/B/C/D=2-1280"/>
</dbReference>
<dbReference type="PDB" id="8SIA">
    <property type="method" value="EM"/>
    <property type="resolution" value="2.91 A"/>
    <property type="chains" value="A/B/C/D=2-1280"/>
</dbReference>
<dbReference type="PDB" id="8SIB">
    <property type="method" value="EM"/>
    <property type="resolution" value="2.62 A"/>
    <property type="chains" value="A=2-1280"/>
</dbReference>
<dbReference type="PDB" id="8W2L">
    <property type="method" value="EM"/>
    <property type="resolution" value="2.45 A"/>
    <property type="chains" value="A/B/C/D=3-1280"/>
</dbReference>
<dbReference type="PDBsum" id="1IA9"/>
<dbReference type="PDBsum" id="1IAH"/>
<dbReference type="PDBsum" id="1IAJ"/>
<dbReference type="PDBsum" id="5ZX5"/>
<dbReference type="PDBsum" id="6BWD"/>
<dbReference type="PDBsum" id="6BWF"/>
<dbReference type="PDBsum" id="8SI2"/>
<dbReference type="PDBsum" id="8SI3"/>
<dbReference type="PDBsum" id="8SI4"/>
<dbReference type="PDBsum" id="8SI5"/>
<dbReference type="PDBsum" id="8SI6"/>
<dbReference type="PDBsum" id="8SI7"/>
<dbReference type="PDBsum" id="8SI8"/>
<dbReference type="PDBsum" id="8SIA"/>
<dbReference type="PDBsum" id="8SIB"/>
<dbReference type="PDBsum" id="8W2L"/>
<dbReference type="EMDB" id="EMD-40496"/>
<dbReference type="EMDB" id="EMD-40497"/>
<dbReference type="EMDB" id="EMD-40498"/>
<dbReference type="EMDB" id="EMD-40499"/>
<dbReference type="EMDB" id="EMD-40500"/>
<dbReference type="EMDB" id="EMD-40501"/>
<dbReference type="EMDB" id="EMD-40502"/>
<dbReference type="EMDB" id="EMD-40504"/>
<dbReference type="EMDB" id="EMD-40505"/>
<dbReference type="EMDB" id="EMD-43751"/>
<dbReference type="EMDB" id="EMD-6975"/>
<dbReference type="EMDB" id="EMD-7297"/>
<dbReference type="EMDB" id="EMD-7298"/>
<dbReference type="SMR" id="Q923J1"/>
<dbReference type="BioGRID" id="208438">
    <property type="interactions" value="6"/>
</dbReference>
<dbReference type="FunCoup" id="Q923J1">
    <property type="interactions" value="2538"/>
</dbReference>
<dbReference type="IntAct" id="Q923J1">
    <property type="interactions" value="105"/>
</dbReference>
<dbReference type="MINT" id="Q923J1"/>
<dbReference type="STRING" id="10090.ENSMUSP00000099513"/>
<dbReference type="BindingDB" id="Q923J1"/>
<dbReference type="ChEMBL" id="CHEMBL3714706"/>
<dbReference type="DrugCentral" id="Q923J1"/>
<dbReference type="GuidetoPHARMACOLOGY" id="499"/>
<dbReference type="iPTMnet" id="Q923J1"/>
<dbReference type="PhosphoSitePlus" id="Q923J1"/>
<dbReference type="SwissPalm" id="Q923J1"/>
<dbReference type="CPTAC" id="non-CPTAC-4068"/>
<dbReference type="jPOST" id="Q923J1"/>
<dbReference type="PaxDb" id="10090-ENSMUSP00000099513"/>
<dbReference type="ProteomicsDB" id="300026"/>
<dbReference type="Pumba" id="Q923J1"/>
<dbReference type="ABCD" id="Q923J1">
    <property type="antibodies" value="1 sequenced antibody"/>
</dbReference>
<dbReference type="Antibodypedia" id="24755">
    <property type="antibodies" value="463 antibodies from 39 providers"/>
</dbReference>
<dbReference type="DNASU" id="58800"/>
<dbReference type="Ensembl" id="ENSMUST00000103224.10">
    <property type="protein sequence ID" value="ENSMUSP00000099513.4"/>
    <property type="gene ID" value="ENSMUSG00000027365.15"/>
</dbReference>
<dbReference type="GeneID" id="58800"/>
<dbReference type="KEGG" id="mmu:58800"/>
<dbReference type="UCSC" id="uc008mef.2">
    <property type="organism name" value="mouse"/>
</dbReference>
<dbReference type="AGR" id="MGI:1929996"/>
<dbReference type="CTD" id="54822"/>
<dbReference type="MGI" id="MGI:1929996">
    <property type="gene designation" value="Trpm7"/>
</dbReference>
<dbReference type="VEuPathDB" id="HostDB:ENSMUSG00000027365"/>
<dbReference type="eggNOG" id="KOG3614">
    <property type="taxonomic scope" value="Eukaryota"/>
</dbReference>
<dbReference type="GeneTree" id="ENSGT00940000157091"/>
<dbReference type="InParanoid" id="Q923J1"/>
<dbReference type="OMA" id="SSKDPHX"/>
<dbReference type="OrthoDB" id="301415at2759"/>
<dbReference type="PhylomeDB" id="Q923J1"/>
<dbReference type="TreeFam" id="TF314204"/>
<dbReference type="Reactome" id="R-MMU-3295583">
    <property type="pathway name" value="TRP channels"/>
</dbReference>
<dbReference type="BioGRID-ORCS" id="58800">
    <property type="hits" value="25 hits in 80 CRISPR screens"/>
</dbReference>
<dbReference type="ChiTaRS" id="Trpm7">
    <property type="organism name" value="mouse"/>
</dbReference>
<dbReference type="EvolutionaryTrace" id="Q923J1"/>
<dbReference type="PRO" id="PR:Q923J1"/>
<dbReference type="Proteomes" id="UP000000589">
    <property type="component" value="Chromosome 2"/>
</dbReference>
<dbReference type="RNAct" id="Q923J1">
    <property type="molecule type" value="protein"/>
</dbReference>
<dbReference type="Bgee" id="ENSMUSG00000027365">
    <property type="expression patterns" value="Expressed in molar tooth and 252 other cell types or tissues"/>
</dbReference>
<dbReference type="ExpressionAtlas" id="Q923J1">
    <property type="expression patterns" value="baseline and differential"/>
</dbReference>
<dbReference type="GO" id="GO:0031410">
    <property type="term" value="C:cytoplasmic vesicle"/>
    <property type="evidence" value="ECO:0000314"/>
    <property type="project" value="UniProtKB"/>
</dbReference>
<dbReference type="GO" id="GO:0030659">
    <property type="term" value="C:cytoplasmic vesicle membrane"/>
    <property type="evidence" value="ECO:0007669"/>
    <property type="project" value="UniProtKB-SubCell"/>
</dbReference>
<dbReference type="GO" id="GO:0005634">
    <property type="term" value="C:nucleus"/>
    <property type="evidence" value="ECO:0000314"/>
    <property type="project" value="UniProtKB"/>
</dbReference>
<dbReference type="GO" id="GO:0005886">
    <property type="term" value="C:plasma membrane"/>
    <property type="evidence" value="ECO:0000314"/>
    <property type="project" value="MGI"/>
</dbReference>
<dbReference type="GO" id="GO:0001726">
    <property type="term" value="C:ruffle"/>
    <property type="evidence" value="ECO:0000314"/>
    <property type="project" value="MGI"/>
</dbReference>
<dbReference type="GO" id="GO:0003779">
    <property type="term" value="F:actin binding"/>
    <property type="evidence" value="ECO:0000314"/>
    <property type="project" value="MGI"/>
</dbReference>
<dbReference type="GO" id="GO:0005524">
    <property type="term" value="F:ATP binding"/>
    <property type="evidence" value="ECO:0007669"/>
    <property type="project" value="UniProtKB-KW"/>
</dbReference>
<dbReference type="GO" id="GO:0005262">
    <property type="term" value="F:calcium channel activity"/>
    <property type="evidence" value="ECO:0000314"/>
    <property type="project" value="MGI"/>
</dbReference>
<dbReference type="GO" id="GO:0016301">
    <property type="term" value="F:kinase activity"/>
    <property type="evidence" value="ECO:0000314"/>
    <property type="project" value="MGI"/>
</dbReference>
<dbReference type="GO" id="GO:0015095">
    <property type="term" value="F:magnesium ion transmembrane transporter activity"/>
    <property type="evidence" value="ECO:0007669"/>
    <property type="project" value="Ensembl"/>
</dbReference>
<dbReference type="GO" id="GO:0046872">
    <property type="term" value="F:metal ion binding"/>
    <property type="evidence" value="ECO:0007669"/>
    <property type="project" value="UniProtKB-KW"/>
</dbReference>
<dbReference type="GO" id="GO:0017022">
    <property type="term" value="F:myosin binding"/>
    <property type="evidence" value="ECO:0000353"/>
    <property type="project" value="MGI"/>
</dbReference>
<dbReference type="GO" id="GO:0004672">
    <property type="term" value="F:protein kinase activity"/>
    <property type="evidence" value="ECO:0000314"/>
    <property type="project" value="UniProtKB"/>
</dbReference>
<dbReference type="GO" id="GO:0106310">
    <property type="term" value="F:protein serine kinase activity"/>
    <property type="evidence" value="ECO:0007669"/>
    <property type="project" value="RHEA"/>
</dbReference>
<dbReference type="GO" id="GO:0004674">
    <property type="term" value="F:protein serine/threonine kinase activity"/>
    <property type="evidence" value="ECO:0000250"/>
    <property type="project" value="UniProtKB"/>
</dbReference>
<dbReference type="GO" id="GO:0005385">
    <property type="term" value="F:zinc ion transmembrane transporter activity"/>
    <property type="evidence" value="ECO:0000314"/>
    <property type="project" value="UniProtKB"/>
</dbReference>
<dbReference type="GO" id="GO:0031032">
    <property type="term" value="P:actomyosin structure organization"/>
    <property type="evidence" value="ECO:0000314"/>
    <property type="project" value="MGI"/>
</dbReference>
<dbReference type="GO" id="GO:0006816">
    <property type="term" value="P:calcium ion transport"/>
    <property type="evidence" value="ECO:0000314"/>
    <property type="project" value="MGI"/>
</dbReference>
<dbReference type="GO" id="GO:0016340">
    <property type="term" value="P:calcium-dependent cell-matrix adhesion"/>
    <property type="evidence" value="ECO:0000314"/>
    <property type="project" value="MGI"/>
</dbReference>
<dbReference type="GO" id="GO:0010961">
    <property type="term" value="P:intracellular magnesium ion homeostasis"/>
    <property type="evidence" value="ECO:0000315"/>
    <property type="project" value="UniProtKB"/>
</dbReference>
<dbReference type="GO" id="GO:1903830">
    <property type="term" value="P:magnesium ion transmembrane transport"/>
    <property type="evidence" value="ECO:0000314"/>
    <property type="project" value="UniProtKB"/>
</dbReference>
<dbReference type="GO" id="GO:0070266">
    <property type="term" value="P:necroptotic process"/>
    <property type="evidence" value="ECO:0000250"/>
    <property type="project" value="UniProtKB"/>
</dbReference>
<dbReference type="GO" id="GO:0046777">
    <property type="term" value="P:protein autophosphorylation"/>
    <property type="evidence" value="ECO:0000250"/>
    <property type="project" value="UniProtKB"/>
</dbReference>
<dbReference type="GO" id="GO:0051289">
    <property type="term" value="P:protein homotetramerization"/>
    <property type="evidence" value="ECO:0000314"/>
    <property type="project" value="UniProtKB"/>
</dbReference>
<dbReference type="GO" id="GO:0006829">
    <property type="term" value="P:zinc ion transport"/>
    <property type="evidence" value="ECO:0000314"/>
    <property type="project" value="UniProtKB"/>
</dbReference>
<dbReference type="CDD" id="cd16971">
    <property type="entry name" value="Alpha_kinase_ChaK1_TRMP7"/>
    <property type="match status" value="1"/>
</dbReference>
<dbReference type="FunFam" id="1.20.5.1010:FF:000002">
    <property type="entry name" value="Transient receptor potential cation channel subfamily M member 7"/>
    <property type="match status" value="1"/>
</dbReference>
<dbReference type="FunFam" id="3.20.200.10:FF:000001">
    <property type="entry name" value="Transient receptor potential cation channel, subfamily M, member 7"/>
    <property type="match status" value="1"/>
</dbReference>
<dbReference type="FunFam" id="3.30.200.20:FF:000129">
    <property type="entry name" value="Transient receptor potential cation channel, subfamily M, member 7"/>
    <property type="match status" value="1"/>
</dbReference>
<dbReference type="Gene3D" id="3.20.200.10">
    <property type="entry name" value="MHCK/EF2 kinase"/>
    <property type="match status" value="1"/>
</dbReference>
<dbReference type="Gene3D" id="3.30.200.20">
    <property type="entry name" value="Phosphorylase Kinase, domain 1"/>
    <property type="match status" value="1"/>
</dbReference>
<dbReference type="Gene3D" id="1.20.5.1010">
    <property type="entry name" value="TRPM, tetramerisation domain"/>
    <property type="match status" value="1"/>
</dbReference>
<dbReference type="InterPro" id="IPR004166">
    <property type="entry name" value="a-kinase_dom"/>
</dbReference>
<dbReference type="InterPro" id="IPR005821">
    <property type="entry name" value="Ion_trans_dom"/>
</dbReference>
<dbReference type="InterPro" id="IPR011009">
    <property type="entry name" value="Kinase-like_dom_sf"/>
</dbReference>
<dbReference type="InterPro" id="IPR050927">
    <property type="entry name" value="TRPM"/>
</dbReference>
<dbReference type="InterPro" id="IPR029601">
    <property type="entry name" value="TRPM7_a-kinase_dom"/>
</dbReference>
<dbReference type="InterPro" id="IPR041491">
    <property type="entry name" value="TRPM_SLOG"/>
</dbReference>
<dbReference type="InterPro" id="IPR032415">
    <property type="entry name" value="TRPM_tetra"/>
</dbReference>
<dbReference type="InterPro" id="IPR037162">
    <property type="entry name" value="TRPM_tetra_sf"/>
</dbReference>
<dbReference type="PANTHER" id="PTHR13800:SF8">
    <property type="entry name" value="TRANSIENT RECEPTOR POTENTIAL CATION CHANNEL SUBFAMILY M MEMBER 7"/>
    <property type="match status" value="1"/>
</dbReference>
<dbReference type="PANTHER" id="PTHR13800">
    <property type="entry name" value="TRANSIENT RECEPTOR POTENTIAL CATION CHANNEL, SUBFAMILY M, MEMBER 6"/>
    <property type="match status" value="1"/>
</dbReference>
<dbReference type="Pfam" id="PF02816">
    <property type="entry name" value="Alpha_kinase"/>
    <property type="match status" value="1"/>
</dbReference>
<dbReference type="Pfam" id="PF00520">
    <property type="entry name" value="Ion_trans"/>
    <property type="match status" value="1"/>
</dbReference>
<dbReference type="Pfam" id="PF18139">
    <property type="entry name" value="LSDAT_euk"/>
    <property type="match status" value="1"/>
</dbReference>
<dbReference type="Pfam" id="PF25508">
    <property type="entry name" value="TRPM2"/>
    <property type="match status" value="2"/>
</dbReference>
<dbReference type="Pfam" id="PF16519">
    <property type="entry name" value="TRPM_tetra"/>
    <property type="match status" value="1"/>
</dbReference>
<dbReference type="SMART" id="SM00811">
    <property type="entry name" value="Alpha_kinase"/>
    <property type="match status" value="1"/>
</dbReference>
<dbReference type="SUPFAM" id="SSF56112">
    <property type="entry name" value="Protein kinase-like (PK-like)"/>
    <property type="match status" value="1"/>
</dbReference>
<dbReference type="PROSITE" id="PS51158">
    <property type="entry name" value="ALPHA_KINASE"/>
    <property type="match status" value="1"/>
</dbReference>
<sequence>MSQKSWIESTLTKRECVYIIPSSKDPHRCLPGCQICQQLVRCFCGRLVKQHACFTASLAMKYSDVKLGEHFNQAIEEWSVEKHTEQSPTDAYGVINFQGGSHSYRAKYVRLSYDTKPEIILQLLLKEWQMELPKLVISVHGGMQKFELHPRIKQLLGKGLIKAAVTTGAWILTGGVNTGVAKHVGDALKEHASRSSRKICTIGIAPWGVIENRNDLVGRDVVAPYQTLLNPLSKLNVLNNLHSHFILVDDGTVGKYGAEVRLRRELEKTINQQRIHARIGQGVPVVALIFEGGPNVILTVLEYLQESPPVPVVVCEGTGRAADLLAYIHKQTEEGGNLPDAAEPDIISTIKKTFNFGQSEAVHLFQTMMECMKKKELITVFHIGSEDHQDIDVAILTALLKGTNASAFDQLILTLAWDRVDIAKNHVFVYGQQWLVGSLEQAMLDALVMDRVSFVKLLIENGVSMHKFLTIPRLEELYNTKQGPTNPMLFHLIRDVKQGNLPPGYKITLIDIGLVIEYLMGGTYRCTYTRKRFRLIYNSLGGNNRRSGRNTSSSTPQLRKSHETFGNRADKKEKMRHNHFIKTAQPYRPKMDASMEEGKKKRTKDEIVDIDDPETKRFPYPLNELLIWACLMKRQVMARFLWQHGEESMAKALVACKIYRSMAYEAKQSDLVDDTSEELKQYSNDFGQLAVELLEQSFRQDETMAMKLLTYELKNWSNSTCLKLAVSSRLRPFVAHTCTQMLLSDMWMGRLNMRKNSWYKVILSILVPPAILMLEYKTKAEMSHIPQSQDAHQMTMEDSENNFHNITEEIPMEVFKEVKILDSSDGKNEMEIHIKSKKLPITRKFYAFYHAPIVKFWFNTLAYLGFLMLYTFVVLVKMEQLPSVQEWIVIAYIFTYAIEKVREVFMSEAGKISQKIKVWFSDYFNVSDTIAIISFFVGFGLRFGAKWNYINAYDNHVFVAGRLIYCLNIIFWYVRLLDFLAVNQQAGPYVMMIGKMVANMFYIVVIMALVLLSFGVPRKAILYPHEEPSWSLAKDIVFHPYWMIFGEVYAYEIDVCANDSTLPTICGPGTWLTPFLQAVYLFVQYIIMVNLLIAFFNNVYLQVKAISNIVWKYQRYHFIMAYHEKPVLPPPLIILSHIVSLFCCVCKRRKKDKTSDGPKLFLTEEDQKKLHDFEEQCVEMYFDEKDDKFNSGSEERIRVTFERVEQMSIQIKEVGDRVNYIKRSLQSLDSQIGHLQDLSALTVDTLKTLTAQKASEASKVHNEITRELSISKHLAQNLIDDVPVRPLWKKPSAVNTLSSSLPQGDRESNNPFLCNIFMKDEKDPQYNLFGQDLPVIPQRKEFNIPEAGSSCGALFPSAVSPPELRQRRHGVEMLKIFNKNQKLGSSPNSSPHMSSPPTKFSVSTPSQPSCKSHLESTTKDQEPIFYKAAEGDNIEFGAFVGHRDSMDLQRFKETSNKIRELLSNDTPENTLKHVGAAGYSECCKTSTSLHSVQAESCSRRASTEDSPEVDSKAALLPDWLRDRPSNREMPSEGGTLNGLASPFKPVLDTNYYYSAVERNNLMRLSQSIPFVPVPPRGEPVTVYRLEESSPSILNNSMSSWSQLGLCAKIEFLSKEEMGGGLRRAVKVLCTWSEHDILKSGHLYIIKSFLPEVINTWSSIYKEDTVLHLCLREIQQQRAAQKLTFAFNQMKPKSIPYSPRFLEVFLLYCHSAGQWFAVEECMTGEFRKYNNNNGDEIIPTNTLEEIMLAFSHWTYEYTRGELLVLDLQGVGENLTDPSVIKAEEKRSCDMVFGPANLGEDAIKNFRAKHHCNSCCRKLKLPDLKRNDYTPDKIIFPQDESSDLNLQSGNSTKESEATNSVRLML</sequence>
<evidence type="ECO:0000250" key="1"/>
<evidence type="ECO:0000250" key="2">
    <source>
        <dbReference type="UniProtKB" id="Q925B3"/>
    </source>
</evidence>
<evidence type="ECO:0000250" key="3">
    <source>
        <dbReference type="UniProtKB" id="Q96QT4"/>
    </source>
</evidence>
<evidence type="ECO:0000255" key="4">
    <source>
        <dbReference type="PROSITE-ProRule" id="PRU00501"/>
    </source>
</evidence>
<evidence type="ECO:0000256" key="5">
    <source>
        <dbReference type="SAM" id="MobiDB-lite"/>
    </source>
</evidence>
<evidence type="ECO:0000269" key="6">
    <source>
    </source>
</evidence>
<evidence type="ECO:0000269" key="7">
    <source>
    </source>
</evidence>
<evidence type="ECO:0000269" key="8">
    <source>
    </source>
</evidence>
<evidence type="ECO:0000269" key="9">
    <source>
    </source>
</evidence>
<evidence type="ECO:0000269" key="10">
    <source>
    </source>
</evidence>
<evidence type="ECO:0000269" key="11">
    <source>
    </source>
</evidence>
<evidence type="ECO:0000269" key="12">
    <source>
    </source>
</evidence>
<evidence type="ECO:0000269" key="13">
    <source>
    </source>
</evidence>
<evidence type="ECO:0000269" key="14">
    <source>
    </source>
</evidence>
<evidence type="ECO:0000269" key="15">
    <source>
    </source>
</evidence>
<evidence type="ECO:0000269" key="16">
    <source>
    </source>
</evidence>
<evidence type="ECO:0000269" key="17">
    <source>
    </source>
</evidence>
<evidence type="ECO:0000269" key="18">
    <source>
    </source>
</evidence>
<evidence type="ECO:0000269" key="19">
    <source>
    </source>
</evidence>
<evidence type="ECO:0000269" key="20">
    <source>
    </source>
</evidence>
<evidence type="ECO:0000269" key="21">
    <source>
    </source>
</evidence>
<evidence type="ECO:0000269" key="22">
    <source>
    </source>
</evidence>
<evidence type="ECO:0000269" key="23">
    <source>
    </source>
</evidence>
<evidence type="ECO:0000269" key="24">
    <source>
    </source>
</evidence>
<evidence type="ECO:0000269" key="25">
    <source>
    </source>
</evidence>
<evidence type="ECO:0000269" key="26">
    <source>
    </source>
</evidence>
<evidence type="ECO:0000303" key="27">
    <source>
    </source>
</evidence>
<evidence type="ECO:0000303" key="28">
    <source>
    </source>
</evidence>
<evidence type="ECO:0000303" key="29">
    <source>
    </source>
</evidence>
<evidence type="ECO:0000305" key="30"/>
<evidence type="ECO:0000305" key="31">
    <source>
    </source>
</evidence>
<evidence type="ECO:0007744" key="32">
    <source>
        <dbReference type="PDB" id="1IA9"/>
    </source>
</evidence>
<evidence type="ECO:0007744" key="33">
    <source>
        <dbReference type="PDB" id="1IAH"/>
    </source>
</evidence>
<evidence type="ECO:0007744" key="34">
    <source>
        <dbReference type="PDB" id="1IAJ"/>
    </source>
</evidence>
<evidence type="ECO:0007744" key="35">
    <source>
        <dbReference type="PDB" id="5ZX5"/>
    </source>
</evidence>
<evidence type="ECO:0007744" key="36">
    <source>
        <dbReference type="PDB" id="6BWD"/>
    </source>
</evidence>
<evidence type="ECO:0007744" key="37">
    <source>
        <dbReference type="PDB" id="6BWF"/>
    </source>
</evidence>
<evidence type="ECO:0007744" key="38">
    <source>
        <dbReference type="PDB" id="8SI2"/>
    </source>
</evidence>
<evidence type="ECO:0007744" key="39">
    <source>
        <dbReference type="PDB" id="8SI3"/>
    </source>
</evidence>
<evidence type="ECO:0007744" key="40">
    <source>
        <dbReference type="PDB" id="8SI4"/>
    </source>
</evidence>
<evidence type="ECO:0007744" key="41">
    <source>
        <dbReference type="PDB" id="8SI5"/>
    </source>
</evidence>
<evidence type="ECO:0007744" key="42">
    <source>
        <dbReference type="PDB" id="8SI6"/>
    </source>
</evidence>
<evidence type="ECO:0007744" key="43">
    <source>
        <dbReference type="PDB" id="8SI7"/>
    </source>
</evidence>
<evidence type="ECO:0007744" key="44">
    <source>
        <dbReference type="PDB" id="8SI8"/>
    </source>
</evidence>
<evidence type="ECO:0007744" key="45">
    <source>
        <dbReference type="PDB" id="8SIA"/>
    </source>
</evidence>
<evidence type="ECO:0007744" key="46">
    <source>
        <dbReference type="PDB" id="8SIB"/>
    </source>
</evidence>
<evidence type="ECO:0007744" key="47">
    <source>
    </source>
</evidence>
<evidence type="ECO:0007744" key="48">
    <source>
    </source>
</evidence>
<evidence type="ECO:0007829" key="49">
    <source>
        <dbReference type="PDB" id="1IA9"/>
    </source>
</evidence>
<evidence type="ECO:0007829" key="50">
    <source>
        <dbReference type="PDB" id="1IAJ"/>
    </source>
</evidence>
<evidence type="ECO:0007829" key="51">
    <source>
        <dbReference type="PDB" id="8SI2"/>
    </source>
</evidence>
<evidence type="ECO:0007829" key="52">
    <source>
        <dbReference type="PDB" id="8SI3"/>
    </source>
</evidence>
<evidence type="ECO:0007829" key="53">
    <source>
        <dbReference type="PDB" id="8SI5"/>
    </source>
</evidence>
<evidence type="ECO:0007829" key="54">
    <source>
        <dbReference type="PDB" id="8SI6"/>
    </source>
</evidence>
<evidence type="ECO:0007829" key="55">
    <source>
        <dbReference type="PDB" id="8SI7"/>
    </source>
</evidence>
<evidence type="ECO:0007829" key="56">
    <source>
        <dbReference type="PDB" id="8SI8"/>
    </source>
</evidence>
<evidence type="ECO:0007829" key="57">
    <source>
        <dbReference type="PDB" id="8SIA"/>
    </source>
</evidence>
<evidence type="ECO:0007829" key="58">
    <source>
        <dbReference type="PDB" id="8SIB"/>
    </source>
</evidence>
<gene>
    <name type="primary">Trpm7</name>
    <name type="synonym">Chak</name>
    <name evidence="28" type="synonym">Ltrpc7</name>
</gene>
<name>TRPM7_MOUSE</name>
<reference key="1">
    <citation type="journal article" date="2001" name="Nature">
        <title>LTRPC7 is a Mg.ATP-regulated divalent cation channel required for cell viability.</title>
        <authorList>
            <person name="Nadler M.J.S."/>
            <person name="Hermosura M.C."/>
            <person name="Inabe K."/>
            <person name="Perraud A.-L."/>
            <person name="Zhu Q."/>
            <person name="Stokes A.J."/>
            <person name="Kurosaki T."/>
            <person name="Kinet J.-P."/>
            <person name="Penner R."/>
            <person name="Scharenberg A.M."/>
            <person name="Fleig A."/>
        </authorList>
    </citation>
    <scope>NUCLEOTIDE SEQUENCE [MRNA]</scope>
    <scope>FUNCTION</scope>
    <scope>TRANSPORTER ACTIVITY</scope>
    <scope>ACTIVITY REGULATION</scope>
</reference>
<reference key="2">
    <citation type="journal article" date="2001" name="Science">
        <title>TRP-PLIK, a bifunctional protein with kinase and ion channel activities.</title>
        <authorList>
            <person name="Runnels L.W."/>
            <person name="Yue L."/>
            <person name="Clapham D.E."/>
        </authorList>
    </citation>
    <scope>NUCLEOTIDE SEQUENCE [MRNA]</scope>
    <scope>FUNCTION</scope>
    <scope>CATALYTIC ACTIVITY</scope>
    <scope>TRANSPORTER ACTIVITY</scope>
    <scope>PHOSPHORYLATION</scope>
    <scope>TISSUE SPECIFICITY</scope>
    <scope>MUTAGENESIS OF GLY-1797; CYS-1810 AND CYS-1813</scope>
    <source>
        <strain>BALB/cJ</strain>
    </source>
</reference>
<reference key="3">
    <citation type="submission" date="1999-05" db="EMBL/GenBank/DDBJ databases">
        <authorList>
            <person name="Matsushita M."/>
        </authorList>
    </citation>
    <scope>NUCLEOTIDE SEQUENCE [MRNA]</scope>
</reference>
<reference key="4">
    <citation type="journal article" date="2009" name="PLoS Biol.">
        <title>Lineage-specific biology revealed by a finished genome assembly of the mouse.</title>
        <authorList>
            <person name="Church D.M."/>
            <person name="Goodstadt L."/>
            <person name="Hillier L.W."/>
            <person name="Zody M.C."/>
            <person name="Goldstein S."/>
            <person name="She X."/>
            <person name="Bult C.J."/>
            <person name="Agarwala R."/>
            <person name="Cherry J.L."/>
            <person name="DiCuccio M."/>
            <person name="Hlavina W."/>
            <person name="Kapustin Y."/>
            <person name="Meric P."/>
            <person name="Maglott D."/>
            <person name="Birtle Z."/>
            <person name="Marques A.C."/>
            <person name="Graves T."/>
            <person name="Zhou S."/>
            <person name="Teague B."/>
            <person name="Potamousis K."/>
            <person name="Churas C."/>
            <person name="Place M."/>
            <person name="Herschleb J."/>
            <person name="Runnheim R."/>
            <person name="Forrest D."/>
            <person name="Amos-Landgraf J."/>
            <person name="Schwartz D.C."/>
            <person name="Cheng Z."/>
            <person name="Lindblad-Toh K."/>
            <person name="Eichler E.E."/>
            <person name="Ponting C.P."/>
        </authorList>
    </citation>
    <scope>NUCLEOTIDE SEQUENCE [LARGE SCALE GENOMIC DNA]</scope>
    <source>
        <strain>C57BL/6J</strain>
    </source>
</reference>
<reference key="5">
    <citation type="journal article" date="2005" name="Science">
        <title>The transcriptional landscape of the mammalian genome.</title>
        <authorList>
            <person name="Carninci P."/>
            <person name="Kasukawa T."/>
            <person name="Katayama S."/>
            <person name="Gough J."/>
            <person name="Frith M.C."/>
            <person name="Maeda N."/>
            <person name="Oyama R."/>
            <person name="Ravasi T."/>
            <person name="Lenhard B."/>
            <person name="Wells C."/>
            <person name="Kodzius R."/>
            <person name="Shimokawa K."/>
            <person name="Bajic V.B."/>
            <person name="Brenner S.E."/>
            <person name="Batalov S."/>
            <person name="Forrest A.R."/>
            <person name="Zavolan M."/>
            <person name="Davis M.J."/>
            <person name="Wilming L.G."/>
            <person name="Aidinis V."/>
            <person name="Allen J.E."/>
            <person name="Ambesi-Impiombato A."/>
            <person name="Apweiler R."/>
            <person name="Aturaliya R.N."/>
            <person name="Bailey T.L."/>
            <person name="Bansal M."/>
            <person name="Baxter L."/>
            <person name="Beisel K.W."/>
            <person name="Bersano T."/>
            <person name="Bono H."/>
            <person name="Chalk A.M."/>
            <person name="Chiu K.P."/>
            <person name="Choudhary V."/>
            <person name="Christoffels A."/>
            <person name="Clutterbuck D.R."/>
            <person name="Crowe M.L."/>
            <person name="Dalla E."/>
            <person name="Dalrymple B.P."/>
            <person name="de Bono B."/>
            <person name="Della Gatta G."/>
            <person name="di Bernardo D."/>
            <person name="Down T."/>
            <person name="Engstrom P."/>
            <person name="Fagiolini M."/>
            <person name="Faulkner G."/>
            <person name="Fletcher C.F."/>
            <person name="Fukushima T."/>
            <person name="Furuno M."/>
            <person name="Futaki S."/>
            <person name="Gariboldi M."/>
            <person name="Georgii-Hemming P."/>
            <person name="Gingeras T.R."/>
            <person name="Gojobori T."/>
            <person name="Green R.E."/>
            <person name="Gustincich S."/>
            <person name="Harbers M."/>
            <person name="Hayashi Y."/>
            <person name="Hensch T.K."/>
            <person name="Hirokawa N."/>
            <person name="Hill D."/>
            <person name="Huminiecki L."/>
            <person name="Iacono M."/>
            <person name="Ikeo K."/>
            <person name="Iwama A."/>
            <person name="Ishikawa T."/>
            <person name="Jakt M."/>
            <person name="Kanapin A."/>
            <person name="Katoh M."/>
            <person name="Kawasawa Y."/>
            <person name="Kelso J."/>
            <person name="Kitamura H."/>
            <person name="Kitano H."/>
            <person name="Kollias G."/>
            <person name="Krishnan S.P."/>
            <person name="Kruger A."/>
            <person name="Kummerfeld S.K."/>
            <person name="Kurochkin I.V."/>
            <person name="Lareau L.F."/>
            <person name="Lazarevic D."/>
            <person name="Lipovich L."/>
            <person name="Liu J."/>
            <person name="Liuni S."/>
            <person name="McWilliam S."/>
            <person name="Madan Babu M."/>
            <person name="Madera M."/>
            <person name="Marchionni L."/>
            <person name="Matsuda H."/>
            <person name="Matsuzawa S."/>
            <person name="Miki H."/>
            <person name="Mignone F."/>
            <person name="Miyake S."/>
            <person name="Morris K."/>
            <person name="Mottagui-Tabar S."/>
            <person name="Mulder N."/>
            <person name="Nakano N."/>
            <person name="Nakauchi H."/>
            <person name="Ng P."/>
            <person name="Nilsson R."/>
            <person name="Nishiguchi S."/>
            <person name="Nishikawa S."/>
            <person name="Nori F."/>
            <person name="Ohara O."/>
            <person name="Okazaki Y."/>
            <person name="Orlando V."/>
            <person name="Pang K.C."/>
            <person name="Pavan W.J."/>
            <person name="Pavesi G."/>
            <person name="Pesole G."/>
            <person name="Petrovsky N."/>
            <person name="Piazza S."/>
            <person name="Reed J."/>
            <person name="Reid J.F."/>
            <person name="Ring B.Z."/>
            <person name="Ringwald M."/>
            <person name="Rost B."/>
            <person name="Ruan Y."/>
            <person name="Salzberg S.L."/>
            <person name="Sandelin A."/>
            <person name="Schneider C."/>
            <person name="Schoenbach C."/>
            <person name="Sekiguchi K."/>
            <person name="Semple C.A."/>
            <person name="Seno S."/>
            <person name="Sessa L."/>
            <person name="Sheng Y."/>
            <person name="Shibata Y."/>
            <person name="Shimada H."/>
            <person name="Shimada K."/>
            <person name="Silva D."/>
            <person name="Sinclair B."/>
            <person name="Sperling S."/>
            <person name="Stupka E."/>
            <person name="Sugiura K."/>
            <person name="Sultana R."/>
            <person name="Takenaka Y."/>
            <person name="Taki K."/>
            <person name="Tammoja K."/>
            <person name="Tan S.L."/>
            <person name="Tang S."/>
            <person name="Taylor M.S."/>
            <person name="Tegner J."/>
            <person name="Teichmann S.A."/>
            <person name="Ueda H.R."/>
            <person name="van Nimwegen E."/>
            <person name="Verardo R."/>
            <person name="Wei C.L."/>
            <person name="Yagi K."/>
            <person name="Yamanishi H."/>
            <person name="Zabarovsky E."/>
            <person name="Zhu S."/>
            <person name="Zimmer A."/>
            <person name="Hide W."/>
            <person name="Bult C."/>
            <person name="Grimmond S.M."/>
            <person name="Teasdale R.D."/>
            <person name="Liu E.T."/>
            <person name="Brusic V."/>
            <person name="Quackenbush J."/>
            <person name="Wahlestedt C."/>
            <person name="Mattick J.S."/>
            <person name="Hume D.A."/>
            <person name="Kai C."/>
            <person name="Sasaki D."/>
            <person name="Tomaru Y."/>
            <person name="Fukuda S."/>
            <person name="Kanamori-Katayama M."/>
            <person name="Suzuki M."/>
            <person name="Aoki J."/>
            <person name="Arakawa T."/>
            <person name="Iida J."/>
            <person name="Imamura K."/>
            <person name="Itoh M."/>
            <person name="Kato T."/>
            <person name="Kawaji H."/>
            <person name="Kawagashira N."/>
            <person name="Kawashima T."/>
            <person name="Kojima M."/>
            <person name="Kondo S."/>
            <person name="Konno H."/>
            <person name="Nakano K."/>
            <person name="Ninomiya N."/>
            <person name="Nishio T."/>
            <person name="Okada M."/>
            <person name="Plessy C."/>
            <person name="Shibata K."/>
            <person name="Shiraki T."/>
            <person name="Suzuki S."/>
            <person name="Tagami M."/>
            <person name="Waki K."/>
            <person name="Watahiki A."/>
            <person name="Okamura-Oho Y."/>
            <person name="Suzuki H."/>
            <person name="Kawai J."/>
            <person name="Hayashizaki Y."/>
        </authorList>
    </citation>
    <scope>NUCLEOTIDE SEQUENCE [LARGE SCALE MRNA] OF 1-372; 632-1146 AND 1243-1863</scope>
    <source>
        <strain>C57BL/6J</strain>
        <tissue>Head</tissue>
        <tissue>Skin</tissue>
    </source>
</reference>
<reference key="6">
    <citation type="journal article" date="2004" name="Genome Res.">
        <title>The status, quality, and expansion of the NIH full-length cDNA project: the Mammalian Gene Collection (MGC).</title>
        <authorList>
            <consortium name="The MGC Project Team"/>
        </authorList>
    </citation>
    <scope>NUCLEOTIDE SEQUENCE [LARGE SCALE MRNA] OF 1687-1863</scope>
    <source>
        <strain>FVB/N</strain>
        <tissue>Mammary gland</tissue>
    </source>
</reference>
<reference key="7">
    <citation type="journal article" date="2005" name="J. Gen. Physiol.">
        <title>Charge screening by internal pH and polyvalent cations as a mechanism for activation, inhibition, and rundown of TRPM7/MIC channels.</title>
        <authorList>
            <person name="Kozak J.A."/>
            <person name="Matsushita M."/>
            <person name="Nairn A.C."/>
            <person name="Cahalan M.D."/>
        </authorList>
    </citation>
    <scope>FUNCTION</scope>
    <scope>ACTIVITY REGULATION</scope>
</reference>
<reference key="8">
    <citation type="journal article" date="2009" name="Immunity">
        <title>The phagosomal proteome in interferon-gamma-activated macrophages.</title>
        <authorList>
            <person name="Trost M."/>
            <person name="English L."/>
            <person name="Lemieux S."/>
            <person name="Courcelles M."/>
            <person name="Desjardins M."/>
            <person name="Thibault P."/>
        </authorList>
    </citation>
    <scope>PHOSPHORYLATION [LARGE SCALE ANALYSIS] AT SER-1502</scope>
    <scope>IDENTIFICATION BY MASS SPECTROMETRY [LARGE SCALE ANALYSIS]</scope>
</reference>
<reference key="9">
    <citation type="journal article" date="2010" name="Cell">
        <title>A tissue-specific atlas of mouse protein phosphorylation and expression.</title>
        <authorList>
            <person name="Huttlin E.L."/>
            <person name="Jedrychowski M.P."/>
            <person name="Elias J.E."/>
            <person name="Goswami T."/>
            <person name="Rad R."/>
            <person name="Beausoleil S.A."/>
            <person name="Villen J."/>
            <person name="Haas W."/>
            <person name="Sowa M.E."/>
            <person name="Gygi S.P."/>
        </authorList>
    </citation>
    <scope>PHOSPHORYLATION [LARGE SCALE ANALYSIS] AT SER-1255 AND SER-1445</scope>
    <scope>IDENTIFICATION BY MASS SPECTROMETRY [LARGE SCALE ANALYSIS]</scope>
    <source>
        <tissue>Heart</tissue>
        <tissue>Kidney</tissue>
        <tissue>Lung</tissue>
    </source>
</reference>
<reference key="10">
    <citation type="journal article" date="2012" name="Biochem. Biophys. Res. Commun.">
        <title>Identification of the phosphorylation sites on intact TRPM7 channels from mammalian cells.</title>
        <authorList>
            <person name="Kim T.Y."/>
            <person name="Shin S.K."/>
            <person name="Song M.Y."/>
            <person name="Lee J.E."/>
            <person name="Park K.S."/>
        </authorList>
    </citation>
    <scope>PHOSPHORYLATION AT SER-1224; SER-1300; SER-1385; SER-1386; THR-1404; THR-1466; SER-1498; SER-1567; SER-1846 AND SER-1849</scope>
</reference>
<reference key="11">
    <citation type="journal article" date="2008" name="Science">
        <title>Deletion of Trpm7 disrupts embryonic development and thymopoiesis without altering Mg2+ homeostasis.</title>
        <authorList>
            <person name="Jin J."/>
            <person name="Desai B.N."/>
            <person name="Navarro B."/>
            <person name="Donovan A."/>
            <person name="Andrews N.C."/>
            <person name="Clapham D.E."/>
        </authorList>
    </citation>
    <scope>DISRUPTION PHENOTYPE</scope>
    <scope>FUNCTION</scope>
</reference>
<reference key="12">
    <citation type="journal article" date="2010" name="Nat. Commun.">
        <title>TRPM7 is essential for Mg(2+) homeostasis in mammals.</title>
        <authorList>
            <person name="Ryazanova L.V."/>
            <person name="Rondon L.J."/>
            <person name="Zierler S."/>
            <person name="Hu Z."/>
            <person name="Galli J."/>
            <person name="Yamaguchi T.P."/>
            <person name="Mazur A."/>
            <person name="Fleig A."/>
            <person name="Ryazanov A.G."/>
        </authorList>
    </citation>
    <scope>DISRUPTION PHENOTYPE</scope>
    <scope>FUNCTION</scope>
    <scope>ACTIVITY REGULATION</scope>
</reference>
<reference key="13">
    <citation type="journal article" date="2012" name="Dev. Cell">
        <title>Cleavage of TRPM7 releases the kinase domain from the ion channel and regulates its participation in Fas-induced apoptosis.</title>
        <authorList>
            <person name="Desai B.N."/>
            <person name="Krapivinsky G."/>
            <person name="Navarro B."/>
            <person name="Krapivinsky L."/>
            <person name="Carter B.C."/>
            <person name="Febvay S."/>
            <person name="Delling M."/>
            <person name="Penumaka A."/>
            <person name="Ramsey I.S."/>
            <person name="Manasian Y."/>
            <person name="Clapham D.E."/>
        </authorList>
    </citation>
    <scope>FUNCTION</scope>
    <scope>PROTEOLYTIC CLEAVAGE</scope>
</reference>
<reference key="14">
    <citation type="journal article" date="2012" name="Proc. Natl. Acad. Sci. U.S.A.">
        <title>The channel kinase, TRPM7, is required for early embryonic development.</title>
        <authorList>
            <person name="Jin J."/>
            <person name="Wu L.J."/>
            <person name="Jun J."/>
            <person name="Cheng X."/>
            <person name="Xu H."/>
            <person name="Andrews N.C."/>
            <person name="Clapham D.E."/>
        </authorList>
    </citation>
    <scope>DISRUPTION PHENOTYPE</scope>
    <scope>FUNCTION</scope>
</reference>
<reference key="15">
    <citation type="journal article" date="2013" name="Proc. Natl. Acad. Sci. U.S.A.">
        <title>Ion channel-kinase TRPM7 is required for maintaining cardiac automaticity.</title>
        <authorList>
            <person name="Sah R."/>
            <person name="Mesirca P."/>
            <person name="Van den Boogert M."/>
            <person name="Rosen J."/>
            <person name="Mably J."/>
            <person name="Mangoni M.E."/>
            <person name="Clapham D.E."/>
        </authorList>
    </citation>
    <scope>DISRUPTION PHENOTYPE</scope>
    <scope>FUNCTION</scope>
</reference>
<reference key="16">
    <citation type="journal article" date="2014" name="Cell">
        <title>The TRPM7 chanzyme is cleaved to release a chromatin-modifying kinase.</title>
        <authorList>
            <person name="Krapivinsky G."/>
            <person name="Krapivinsky L."/>
            <person name="Manasian Y."/>
            <person name="Clapham D.E."/>
        </authorList>
    </citation>
    <scope>FUNCTION</scope>
    <scope>CATALYTIC ACTIVITY</scope>
    <scope>SUBCELLULAR LOCATION</scope>
    <scope>PROTEOLYTIC CLEAVAGE</scope>
</reference>
<reference key="17">
    <citation type="journal article" date="2014" name="Sci. Rep.">
        <title>Inactivation of TRPM7 kinase activity does not impair its channel function in mice.</title>
        <authorList>
            <person name="Kaitsuka T."/>
            <person name="Katagiri C."/>
            <person name="Beesetty P."/>
            <person name="Nakamura K."/>
            <person name="Hourani S."/>
            <person name="Tomizawa K."/>
            <person name="Kozak J.A."/>
            <person name="Matsushita M."/>
        </authorList>
    </citation>
    <scope>FUNCTION</scope>
    <scope>CATALYTIC ACTIVITY</scope>
    <scope>ACTIVITY REGULATION</scope>
    <scope>MUTAGENESIS OF LYS-1646</scope>
</reference>
<reference key="18">
    <citation type="journal article" date="2017" name="Nat. Commun.">
        <title>TRPM7 kinase activity is essential for T cell colonization and alloreactivity in the gut.</title>
        <authorList>
            <person name="Romagnani A."/>
            <person name="Vettore V."/>
            <person name="Rezzonico-Jost T."/>
            <person name="Hampe S."/>
            <person name="Rottoli E."/>
            <person name="Nadolni W."/>
            <person name="Perotti M."/>
            <person name="Meier M.A."/>
            <person name="Hermanns C."/>
            <person name="Geiger S."/>
            <person name="Wennemuth G."/>
            <person name="Recordati C."/>
            <person name="Matsushita M."/>
            <person name="Muehlich S."/>
            <person name="Proietti M."/>
            <person name="Chubanov V."/>
            <person name="Gudermann T."/>
            <person name="Grassi F."/>
            <person name="Zierler S."/>
        </authorList>
    </citation>
    <scope>FUNCTION</scope>
    <scope>CATALYTIC ACTIVITY</scope>
    <scope>MUTAGENESIS OF LYS-1646</scope>
</reference>
<reference key="19">
    <citation type="journal article" date="2017" name="Sci. Rep.">
        <title>TRPM6 and TRPM7 differentially contribute to the relief of heteromeric TRPM6/7 channels from inhibition by cytosolic Mg2+ and Mg.ATP.</title>
        <authorList>
            <person name="Ferioli S."/>
            <person name="Zierler S."/>
            <person name="Zaisserer J."/>
            <person name="Schredelseker J."/>
            <person name="Gudermann T."/>
            <person name="Chubanov V."/>
        </authorList>
    </citation>
    <scope>SUBUNIT</scope>
    <scope>ACTIVITY REGULATION</scope>
</reference>
<reference key="20">
    <citation type="journal article" date="2017" name="Proc. Natl. Acad. Sci. U.S.A.">
        <title>TRPM7 senses oxidative stress to release Zn2+ from unique intracellular vesicles.</title>
        <authorList>
            <person name="Abiria S.A."/>
            <person name="Krapivinsky G."/>
            <person name="Sah R."/>
            <person name="Santa-Cruz A.G."/>
            <person name="Chaudhuri D."/>
            <person name="Zhang J."/>
            <person name="Adstamongkonkul P."/>
            <person name="DeCaen P.G."/>
            <person name="Clapham D.E."/>
        </authorList>
    </citation>
    <scope>FUNCTION</scope>
    <scope>TRANSPORTER ACTIVITY</scope>
    <scope>SUBCELLULAR LOCATION</scope>
</reference>
<reference key="21">
    <citation type="journal article" date="2018" name="Immunity">
        <title>Chanzyme TRPM7 Mediates the Ca2+ Influx Essential for Lipopolysaccharide-Induced Toll-Like Receptor 4 Endocytosis and Macrophage Activation.</title>
        <authorList>
            <person name="Schappe M.S."/>
            <person name="Szteyn K."/>
            <person name="Stremska M.E."/>
            <person name="Mendu S.K."/>
            <person name="Downs T.K."/>
            <person name="Seegren P.V."/>
            <person name="Mahoney M.A."/>
            <person name="Dixit S."/>
            <person name="Krupa J.K."/>
            <person name="Stipes E.J."/>
            <person name="Rogers J.S."/>
            <person name="Adamson S.E."/>
            <person name="Leitinger N."/>
            <person name="Desai B.N."/>
        </authorList>
    </citation>
    <scope>FUNCTION</scope>
    <scope>TRANSPORTER ACTIVITY</scope>
</reference>
<reference key="22">
    <citation type="journal article" date="2022" name="Cell. Mol. Life Sci.">
        <title>Structural mechanism of TRPM7 channel regulation by intracellular magnesium.</title>
        <authorList>
            <person name="Schmidt E."/>
            <person name="Narangoda C."/>
            <person name="Noerenberg W."/>
            <person name="Egawa M."/>
            <person name="Roessig A."/>
            <person name="Leonhardt M."/>
            <person name="Schaefer M."/>
            <person name="Zierler S."/>
            <person name="Kurnikova M.G."/>
            <person name="Gudermann T."/>
            <person name="Chubanov V."/>
        </authorList>
    </citation>
    <scope>FUNCTION</scope>
    <scope>ACTIVITY REGULATION</scope>
    <scope>MUTAGENESIS OF ASN-1097 AND ASN-1098</scope>
</reference>
<reference key="23">
    <citation type="journal article" date="2019" name="Proc. Natl. Acad. Sci. U.S.A.">
        <title>TRPM7 is the central gatekeeper of intestinal mineral absorption essential for postnatal survival.</title>
        <authorList>
            <person name="Mittermeier L."/>
            <person name="Demirkhanyan L."/>
            <person name="Stadlbauer B."/>
            <person name="Breit A."/>
            <person name="Recordati C."/>
            <person name="Hilgendorff A."/>
            <person name="Matsushita M."/>
            <person name="Braun A."/>
            <person name="Simmons D.G."/>
            <person name="Zakharian E."/>
            <person name="Gudermann T."/>
            <person name="Chubanov V."/>
        </authorList>
    </citation>
    <scope>FUNCTION</scope>
    <scope>DISRUPTION PHENOTYPE</scope>
</reference>
<reference evidence="32 33 34" key="24">
    <citation type="journal article" date="2001" name="Mol. Cell">
        <title>Crystal structure of the atypical protein kinase domain of a TRP channel with phosphotransferase activity.</title>
        <authorList>
            <person name="Yamaguchi H."/>
            <person name="Matsushita M."/>
            <person name="Nairn A.C."/>
            <person name="Kuriyan J."/>
        </authorList>
    </citation>
    <scope>X-RAY CRYSTALLOGRAPHY (2.00 ANGSTROMS) OF 1549-1828 IN COMPLEX WITH ADP AND ZN(2+)</scope>
    <scope>COFACTOR</scope>
    <scope>SUBUNIT</scope>
</reference>
<reference key="25">
    <citation type="journal article" date="2021" name="Cell Rep.">
        <title>Trophectoderm cell failure leads to peri-implantation lethality in Trpm7-deficient mouse embryos.</title>
        <authorList>
            <person name="Schuetz A."/>
            <person name="Richter C."/>
            <person name="Weissgerber P."/>
            <person name="Tsvilovskyy V."/>
            <person name="Hesse M."/>
            <person name="Ottenheijm R."/>
            <person name="Zimmermann F."/>
            <person name="Buchholz S."/>
            <person name="Medert R."/>
            <person name="Dlugosz S."/>
            <person name="Kuryshev V."/>
            <person name="Benes V."/>
            <person name="Flockerzi V."/>
            <person name="Fleischmann B.K."/>
            <person name="Cavalie A."/>
            <person name="Freichel M."/>
        </authorList>
    </citation>
    <scope>DISRUPTION PHENOTYPE</scope>
</reference>
<reference evidence="35 36 37" key="26">
    <citation type="journal article" date="2018" name="Proc. Natl. Acad. Sci. U.S.A.">
        <title>Structure of the mammalian TRPM7, a magnesium channel required during embryonic development.</title>
        <authorList>
            <person name="Duan J."/>
            <person name="Li Z."/>
            <person name="Li J."/>
            <person name="Hulse R.E."/>
            <person name="Santa-Cruz A."/>
            <person name="Valinsky W.C."/>
            <person name="Abiria S.A."/>
            <person name="Krapivinsky G."/>
            <person name="Zhang J."/>
            <person name="Clapham D.E."/>
        </authorList>
    </citation>
    <scope>STRUCTURE BY ELECTRON MICROSCOPY (3.28 ANGSTROMS) OF 2-1230</scope>
</reference>
<reference evidence="38 39 40 41 42 43 44 45 46" key="27">
    <citation type="journal article" date="2023" name="Nat. Commun.">
        <title>Structural mechanisms of TRPM7 activation and inhibition.</title>
        <authorList>
            <person name="Nadezhdin K.D."/>
            <person name="Correia L."/>
            <person name="Narangoda C."/>
            <person name="Patel D.S."/>
            <person name="Neuberger A."/>
            <person name="Gudermann T."/>
            <person name="Kurnikova M.G."/>
            <person name="Chubanov V."/>
            <person name="Sobolevsky A.I."/>
        </authorList>
    </citation>
    <scope>STRUCTURE BY ELECTRON MICROSCOPY (2.17 ANGSTROMS) OF 2-1280 IN COMPLEX WITH AGONIST NALTRIBEN</scope>
    <scope>SUBUNIT</scope>
    <scope>MUTAGENESIS OF ASN-1098</scope>
</reference>